<protein>
    <recommendedName>
        <fullName>Genome polyprotein</fullName>
    </recommendedName>
    <component>
        <recommendedName>
            <fullName>P1</fullName>
        </recommendedName>
    </component>
    <component>
        <recommendedName>
            <fullName>Capsid protein VP0</fullName>
        </recommendedName>
        <alternativeName>
            <fullName>VP4-VP2</fullName>
        </alternativeName>
    </component>
    <component>
        <recommendedName>
            <fullName>Capsid protein VP4</fullName>
        </recommendedName>
        <alternativeName>
            <fullName>P1A</fullName>
        </alternativeName>
        <alternativeName>
            <fullName>Virion protein 4</fullName>
        </alternativeName>
    </component>
    <component>
        <recommendedName>
            <fullName>Capsid protein VP2</fullName>
        </recommendedName>
        <alternativeName>
            <fullName>P1B</fullName>
        </alternativeName>
        <alternativeName>
            <fullName>Virion protein 2</fullName>
        </alternativeName>
    </component>
    <component>
        <recommendedName>
            <fullName>Capsid protein VP3</fullName>
        </recommendedName>
        <alternativeName>
            <fullName>P1C</fullName>
        </alternativeName>
        <alternativeName>
            <fullName>Virion protein 3</fullName>
        </alternativeName>
    </component>
    <component>
        <recommendedName>
            <fullName>Capsid protein VP1</fullName>
        </recommendedName>
        <alternativeName>
            <fullName>P1D</fullName>
        </alternativeName>
        <alternativeName>
            <fullName>Virion protein 1</fullName>
        </alternativeName>
    </component>
    <component>
        <recommendedName>
            <fullName>P2</fullName>
        </recommendedName>
    </component>
    <component>
        <recommendedName>
            <fullName>Protease 2A</fullName>
            <shortName>P2A</shortName>
            <ecNumber evidence="2">3.4.22.29</ecNumber>
        </recommendedName>
        <alternativeName>
            <fullName>Picornain 2A</fullName>
        </alternativeName>
        <alternativeName>
            <fullName>Protein 2A</fullName>
        </alternativeName>
    </component>
    <component>
        <recommendedName>
            <fullName>Protein 2B</fullName>
            <shortName>P2B</shortName>
        </recommendedName>
    </component>
    <component>
        <recommendedName>
            <fullName>Protein 2C</fullName>
            <shortName>P2C</shortName>
            <ecNumber evidence="2">3.6.1.15</ecNumber>
        </recommendedName>
    </component>
    <component>
        <recommendedName>
            <fullName>P3</fullName>
        </recommendedName>
    </component>
    <component>
        <recommendedName>
            <fullName>Protein 3AB</fullName>
        </recommendedName>
    </component>
    <component>
        <recommendedName>
            <fullName>Protein 3A</fullName>
            <shortName>P3A</shortName>
        </recommendedName>
    </component>
    <component>
        <recommendedName>
            <fullName>Viral protein genome-linked</fullName>
            <shortName>VPg</shortName>
        </recommendedName>
        <alternativeName>
            <fullName>Protein 3B</fullName>
            <shortName>P3B</shortName>
        </alternativeName>
    </component>
    <component>
        <recommendedName>
            <fullName>Protein 3CD</fullName>
            <ecNumber>3.4.22.28</ecNumber>
        </recommendedName>
    </component>
    <component>
        <recommendedName>
            <fullName evidence="11">Protease 3C</fullName>
            <ecNumber evidence="11">3.4.22.28</ecNumber>
        </recommendedName>
        <alternativeName>
            <fullName evidence="11">Picornain 3C</fullName>
            <shortName evidence="11">P3C</shortName>
        </alternativeName>
    </component>
    <component>
        <recommendedName>
            <fullName evidence="9">RNA-directed RNA polymerase</fullName>
            <shortName>RdRp</shortName>
            <ecNumber evidence="9">2.7.7.48</ecNumber>
        </recommendedName>
        <alternativeName>
            <fullName>3D polymerase</fullName>
            <shortName>3Dpol</shortName>
        </alternativeName>
        <alternativeName>
            <fullName>Protein 3D</fullName>
            <shortName>3D</shortName>
        </alternativeName>
    </component>
</protein>
<dbReference type="EC" id="3.4.22.29" evidence="2"/>
<dbReference type="EC" id="3.6.1.15" evidence="2"/>
<dbReference type="EC" id="3.4.22.28" evidence="11"/>
<dbReference type="EC" id="2.7.7.48" evidence="9"/>
<dbReference type="EMBL" id="U05876">
    <property type="protein sequence ID" value="AAA50478.1"/>
    <property type="molecule type" value="Genomic_RNA"/>
</dbReference>
<dbReference type="RefSeq" id="NP_042242.1">
    <property type="nucleotide sequence ID" value="NC_001612.1"/>
</dbReference>
<dbReference type="PDB" id="7H2T">
    <property type="method" value="X-ray"/>
    <property type="resolution" value="1.25 A"/>
    <property type="chains" value="A=869-1012"/>
</dbReference>
<dbReference type="PDB" id="7H2U">
    <property type="method" value="X-ray"/>
    <property type="resolution" value="1.11 A"/>
    <property type="chains" value="A=869-1012"/>
</dbReference>
<dbReference type="PDB" id="7H2V">
    <property type="method" value="X-ray"/>
    <property type="resolution" value="1.05 A"/>
    <property type="chains" value="A=869-1012"/>
</dbReference>
<dbReference type="PDB" id="7H2W">
    <property type="method" value="X-ray"/>
    <property type="resolution" value="1.47 A"/>
    <property type="chains" value="A=869-1012"/>
</dbReference>
<dbReference type="PDB" id="7H2X">
    <property type="method" value="X-ray"/>
    <property type="resolution" value="1.25 A"/>
    <property type="chains" value="A/B=869-1012"/>
</dbReference>
<dbReference type="PDB" id="7H2Y">
    <property type="method" value="X-ray"/>
    <property type="resolution" value="1.06 A"/>
    <property type="chains" value="A=869-1012"/>
</dbReference>
<dbReference type="PDB" id="7H2Z">
    <property type="method" value="X-ray"/>
    <property type="resolution" value="1.04 A"/>
    <property type="chains" value="A=869-1012"/>
</dbReference>
<dbReference type="PDB" id="7H30">
    <property type="method" value="X-ray"/>
    <property type="resolution" value="1.34 A"/>
    <property type="chains" value="A/B=869-1012"/>
</dbReference>
<dbReference type="PDB" id="7H31">
    <property type="method" value="X-ray"/>
    <property type="resolution" value="1.53 A"/>
    <property type="chains" value="A=869-1012"/>
</dbReference>
<dbReference type="PDB" id="7H32">
    <property type="method" value="X-ray"/>
    <property type="resolution" value="1.28 A"/>
    <property type="chains" value="A=869-1012"/>
</dbReference>
<dbReference type="PDB" id="7H33">
    <property type="method" value="X-ray"/>
    <property type="resolution" value="1.04 A"/>
    <property type="chains" value="A=869-1012"/>
</dbReference>
<dbReference type="PDB" id="7H34">
    <property type="method" value="X-ray"/>
    <property type="resolution" value="1.39 A"/>
    <property type="chains" value="A=869-1012"/>
</dbReference>
<dbReference type="PDB" id="7H35">
    <property type="method" value="X-ray"/>
    <property type="resolution" value="1.80 A"/>
    <property type="chains" value="A=869-1012"/>
</dbReference>
<dbReference type="PDB" id="7H36">
    <property type="method" value="X-ray"/>
    <property type="resolution" value="1.36 A"/>
    <property type="chains" value="A=869-1012"/>
</dbReference>
<dbReference type="PDB" id="7H37">
    <property type="method" value="X-ray"/>
    <property type="resolution" value="1.33 A"/>
    <property type="chains" value="A=869-1012"/>
</dbReference>
<dbReference type="PDB" id="7H38">
    <property type="method" value="X-ray"/>
    <property type="resolution" value="1.45 A"/>
    <property type="chains" value="A=869-1012"/>
</dbReference>
<dbReference type="PDB" id="7H39">
    <property type="method" value="X-ray"/>
    <property type="resolution" value="1.25 A"/>
    <property type="chains" value="A=869-1012"/>
</dbReference>
<dbReference type="PDB" id="7H3A">
    <property type="method" value="X-ray"/>
    <property type="resolution" value="1.36 A"/>
    <property type="chains" value="A=869-1012"/>
</dbReference>
<dbReference type="PDB" id="7H3B">
    <property type="method" value="X-ray"/>
    <property type="resolution" value="1.09 A"/>
    <property type="chains" value="A=869-1012"/>
</dbReference>
<dbReference type="PDB" id="7H3C">
    <property type="method" value="X-ray"/>
    <property type="resolution" value="1.07 A"/>
    <property type="chains" value="A=869-1012"/>
</dbReference>
<dbReference type="PDB" id="7H3D">
    <property type="method" value="X-ray"/>
    <property type="resolution" value="1.35 A"/>
    <property type="chains" value="A=869-1012"/>
</dbReference>
<dbReference type="PDB" id="7H3E">
    <property type="method" value="X-ray"/>
    <property type="resolution" value="1.39 A"/>
    <property type="chains" value="A=869-1012"/>
</dbReference>
<dbReference type="PDB" id="7H3F">
    <property type="method" value="X-ray"/>
    <property type="resolution" value="1.76 A"/>
    <property type="chains" value="A=869-1012"/>
</dbReference>
<dbReference type="PDB" id="7H3G">
    <property type="method" value="X-ray"/>
    <property type="resolution" value="1.37 A"/>
    <property type="chains" value="A/B=869-1012"/>
</dbReference>
<dbReference type="PDB" id="7H3H">
    <property type="method" value="X-ray"/>
    <property type="resolution" value="1.41 A"/>
    <property type="chains" value="A=869-1012"/>
</dbReference>
<dbReference type="PDB" id="7H3I">
    <property type="method" value="X-ray"/>
    <property type="resolution" value="1.06 A"/>
    <property type="chains" value="A=869-1012"/>
</dbReference>
<dbReference type="PDB" id="7H3J">
    <property type="method" value="X-ray"/>
    <property type="resolution" value="1.11 A"/>
    <property type="chains" value="A=869-1012"/>
</dbReference>
<dbReference type="PDB" id="7H3K">
    <property type="method" value="X-ray"/>
    <property type="resolution" value="1.28 A"/>
    <property type="chains" value="A=869-1012"/>
</dbReference>
<dbReference type="PDB" id="7H3L">
    <property type="method" value="X-ray"/>
    <property type="resolution" value="1.27 A"/>
    <property type="chains" value="A=869-1012"/>
</dbReference>
<dbReference type="PDB" id="7H3M">
    <property type="method" value="X-ray"/>
    <property type="resolution" value="1.33 A"/>
    <property type="chains" value="A=869-1012"/>
</dbReference>
<dbReference type="PDB" id="7H3N">
    <property type="method" value="X-ray"/>
    <property type="resolution" value="1.47 A"/>
    <property type="chains" value="A=869-1012"/>
</dbReference>
<dbReference type="PDB" id="7H3O">
    <property type="method" value="X-ray"/>
    <property type="resolution" value="1.61 A"/>
    <property type="chains" value="A=869-1012"/>
</dbReference>
<dbReference type="PDB" id="7H3P">
    <property type="method" value="X-ray"/>
    <property type="resolution" value="1.50 A"/>
    <property type="chains" value="A=869-1012"/>
</dbReference>
<dbReference type="PDB" id="7H3Q">
    <property type="method" value="X-ray"/>
    <property type="resolution" value="1.05 A"/>
    <property type="chains" value="A=869-1012"/>
</dbReference>
<dbReference type="PDB" id="7H3R">
    <property type="method" value="X-ray"/>
    <property type="resolution" value="1.06 A"/>
    <property type="chains" value="A=869-1012"/>
</dbReference>
<dbReference type="PDB" id="7H3S">
    <property type="method" value="X-ray"/>
    <property type="resolution" value="1.24 A"/>
    <property type="chains" value="A=869-1012"/>
</dbReference>
<dbReference type="PDB" id="7H3T">
    <property type="method" value="X-ray"/>
    <property type="resolution" value="1.20 A"/>
    <property type="chains" value="A=869-1012"/>
</dbReference>
<dbReference type="PDB" id="7H3U">
    <property type="method" value="X-ray"/>
    <property type="resolution" value="1.31 A"/>
    <property type="chains" value="A=869-1012"/>
</dbReference>
<dbReference type="PDB" id="7H3V">
    <property type="method" value="X-ray"/>
    <property type="resolution" value="1.22 A"/>
    <property type="chains" value="A/B=869-1012"/>
</dbReference>
<dbReference type="PDB" id="7H3W">
    <property type="method" value="X-ray"/>
    <property type="resolution" value="1.30 A"/>
    <property type="chains" value="A/B=869-1012"/>
</dbReference>
<dbReference type="PDB" id="7H3X">
    <property type="method" value="X-ray"/>
    <property type="resolution" value="1.31 A"/>
    <property type="chains" value="A=869-1012"/>
</dbReference>
<dbReference type="PDB" id="7H3Y">
    <property type="method" value="X-ray"/>
    <property type="resolution" value="1.11 A"/>
    <property type="chains" value="A=869-1012"/>
</dbReference>
<dbReference type="PDB" id="7H3Z">
    <property type="method" value="X-ray"/>
    <property type="resolution" value="1.19 A"/>
    <property type="chains" value="A=869-1012"/>
</dbReference>
<dbReference type="PDB" id="7H40">
    <property type="method" value="X-ray"/>
    <property type="resolution" value="1.32 A"/>
    <property type="chains" value="A=869-1012"/>
</dbReference>
<dbReference type="PDB" id="7H41">
    <property type="method" value="X-ray"/>
    <property type="resolution" value="1.65 A"/>
    <property type="chains" value="A=869-1012"/>
</dbReference>
<dbReference type="PDB" id="7H42">
    <property type="method" value="X-ray"/>
    <property type="resolution" value="1.24 A"/>
    <property type="chains" value="A=869-1012"/>
</dbReference>
<dbReference type="PDB" id="7H43">
    <property type="method" value="X-ray"/>
    <property type="resolution" value="1.13 A"/>
    <property type="chains" value="A=869-1012"/>
</dbReference>
<dbReference type="PDB" id="7H44">
    <property type="method" value="X-ray"/>
    <property type="resolution" value="1.25 A"/>
    <property type="chains" value="A=869-1012"/>
</dbReference>
<dbReference type="PDB" id="7H45">
    <property type="method" value="X-ray"/>
    <property type="resolution" value="1.32 A"/>
    <property type="chains" value="A=869-1012"/>
</dbReference>
<dbReference type="PDB" id="7H46">
    <property type="method" value="X-ray"/>
    <property type="resolution" value="1.52 A"/>
    <property type="chains" value="A=869-1012"/>
</dbReference>
<dbReference type="PDB" id="7H47">
    <property type="method" value="X-ray"/>
    <property type="resolution" value="1.01 A"/>
    <property type="chains" value="A=869-1012"/>
</dbReference>
<dbReference type="PDB" id="7H48">
    <property type="method" value="X-ray"/>
    <property type="resolution" value="1.23 A"/>
    <property type="chains" value="A=869-1012"/>
</dbReference>
<dbReference type="PDB" id="7H49">
    <property type="method" value="X-ray"/>
    <property type="resolution" value="1.76 A"/>
    <property type="chains" value="A=869-1012"/>
</dbReference>
<dbReference type="PDB" id="7H4A">
    <property type="method" value="X-ray"/>
    <property type="resolution" value="1.43 A"/>
    <property type="chains" value="A=869-1012"/>
</dbReference>
<dbReference type="PDB" id="7H4B">
    <property type="method" value="X-ray"/>
    <property type="resolution" value="1.39 A"/>
    <property type="chains" value="A=869-1012"/>
</dbReference>
<dbReference type="PDB" id="7H4C">
    <property type="method" value="X-ray"/>
    <property type="resolution" value="1.37 A"/>
    <property type="chains" value="A=869-1012"/>
</dbReference>
<dbReference type="PDB" id="7H4D">
    <property type="method" value="X-ray"/>
    <property type="resolution" value="1.94 A"/>
    <property type="chains" value="A=869-1012"/>
</dbReference>
<dbReference type="PDB" id="7H4E">
    <property type="method" value="X-ray"/>
    <property type="resolution" value="1.58 A"/>
    <property type="chains" value="A=869-1012"/>
</dbReference>
<dbReference type="PDB" id="7H4F">
    <property type="method" value="X-ray"/>
    <property type="resolution" value="1.49 A"/>
    <property type="chains" value="A=869-1012"/>
</dbReference>
<dbReference type="PDB" id="7H4G">
    <property type="method" value="X-ray"/>
    <property type="resolution" value="1.72 A"/>
    <property type="chains" value="A=869-1012"/>
</dbReference>
<dbReference type="PDB" id="7H4H">
    <property type="method" value="X-ray"/>
    <property type="resolution" value="1.19 A"/>
    <property type="chains" value="A=869-1012"/>
</dbReference>
<dbReference type="PDB" id="7H4I">
    <property type="method" value="X-ray"/>
    <property type="resolution" value="1.60 A"/>
    <property type="chains" value="A=869-1012"/>
</dbReference>
<dbReference type="PDB" id="7H4J">
    <property type="method" value="X-ray"/>
    <property type="resolution" value="1.79 A"/>
    <property type="chains" value="A=869-1012"/>
</dbReference>
<dbReference type="PDB" id="7H4K">
    <property type="method" value="X-ray"/>
    <property type="resolution" value="1.45 A"/>
    <property type="chains" value="A=869-1012"/>
</dbReference>
<dbReference type="PDB" id="7H4L">
    <property type="method" value="X-ray"/>
    <property type="resolution" value="1.59 A"/>
    <property type="chains" value="A=869-1012"/>
</dbReference>
<dbReference type="PDB" id="7H4M">
    <property type="method" value="X-ray"/>
    <property type="resolution" value="1.42 A"/>
    <property type="chains" value="A=869-1012"/>
</dbReference>
<dbReference type="PDB" id="7H4N">
    <property type="method" value="X-ray"/>
    <property type="resolution" value="1.50 A"/>
    <property type="chains" value="A=869-1012"/>
</dbReference>
<dbReference type="PDB" id="7H4O">
    <property type="method" value="X-ray"/>
    <property type="resolution" value="2.20 A"/>
    <property type="chains" value="A=869-1012"/>
</dbReference>
<dbReference type="PDB" id="7H4P">
    <property type="method" value="X-ray"/>
    <property type="resolution" value="1.11 A"/>
    <property type="chains" value="A=869-1012"/>
</dbReference>
<dbReference type="PDB" id="7H4Q">
    <property type="method" value="X-ray"/>
    <property type="resolution" value="2.03 A"/>
    <property type="chains" value="A=869-1012"/>
</dbReference>
<dbReference type="PDB" id="7H4R">
    <property type="method" value="X-ray"/>
    <property type="resolution" value="1.09 A"/>
    <property type="chains" value="A=869-1012"/>
</dbReference>
<dbReference type="PDB" id="7H4S">
    <property type="method" value="X-ray"/>
    <property type="resolution" value="1.13 A"/>
    <property type="chains" value="A=869-1012"/>
</dbReference>
<dbReference type="PDB" id="7H4T">
    <property type="method" value="X-ray"/>
    <property type="resolution" value="1.69 A"/>
    <property type="chains" value="A=869-1012"/>
</dbReference>
<dbReference type="PDB" id="7H4U">
    <property type="method" value="X-ray"/>
    <property type="resolution" value="1.86 A"/>
    <property type="chains" value="A=869-1012"/>
</dbReference>
<dbReference type="PDB" id="7H4V">
    <property type="method" value="X-ray"/>
    <property type="resolution" value="1.92 A"/>
    <property type="chains" value="A=869-1012"/>
</dbReference>
<dbReference type="PDB" id="7H4W">
    <property type="method" value="X-ray"/>
    <property type="resolution" value="1.52 A"/>
    <property type="chains" value="A=869-1012"/>
</dbReference>
<dbReference type="PDB" id="7H4X">
    <property type="method" value="X-ray"/>
    <property type="resolution" value="1.51 A"/>
    <property type="chains" value="A=869-1012"/>
</dbReference>
<dbReference type="PDB" id="7H4Y">
    <property type="method" value="X-ray"/>
    <property type="resolution" value="2.75 A"/>
    <property type="chains" value="A=869-1012"/>
</dbReference>
<dbReference type="PDB" id="7H4Z">
    <property type="method" value="X-ray"/>
    <property type="resolution" value="1.71 A"/>
    <property type="chains" value="A=869-1012"/>
</dbReference>
<dbReference type="PDB" id="7H50">
    <property type="method" value="X-ray"/>
    <property type="resolution" value="1.06 A"/>
    <property type="chains" value="A/B=869-1012"/>
</dbReference>
<dbReference type="PDB" id="7H51">
    <property type="method" value="X-ray"/>
    <property type="resolution" value="1.05 A"/>
    <property type="chains" value="A/B=869-1012"/>
</dbReference>
<dbReference type="PDB" id="7H52">
    <property type="method" value="X-ray"/>
    <property type="resolution" value="1.21 A"/>
    <property type="chains" value="A/B=869-1012"/>
</dbReference>
<dbReference type="PDB" id="7H53">
    <property type="method" value="X-ray"/>
    <property type="resolution" value="1.12 A"/>
    <property type="chains" value="A/B=869-1012"/>
</dbReference>
<dbReference type="PDB" id="7H54">
    <property type="method" value="X-ray"/>
    <property type="resolution" value="1.10 A"/>
    <property type="chains" value="A/B=869-1012"/>
</dbReference>
<dbReference type="PDB" id="7H55">
    <property type="method" value="X-ray"/>
    <property type="resolution" value="1.12 A"/>
    <property type="chains" value="A/B=869-1012"/>
</dbReference>
<dbReference type="PDB" id="7HOC">
    <property type="method" value="X-ray"/>
    <property type="resolution" value="1.40 A"/>
    <property type="chains" value="A/B=869-1012"/>
</dbReference>
<dbReference type="PDB" id="7HOD">
    <property type="method" value="X-ray"/>
    <property type="resolution" value="1.42 A"/>
    <property type="chains" value="A/B=869-1012"/>
</dbReference>
<dbReference type="PDB" id="7HOE">
    <property type="method" value="X-ray"/>
    <property type="resolution" value="1.32 A"/>
    <property type="chains" value="A/B=869-1012"/>
</dbReference>
<dbReference type="PDB" id="7HOF">
    <property type="method" value="X-ray"/>
    <property type="resolution" value="1.30 A"/>
    <property type="chains" value="A/B=869-1012"/>
</dbReference>
<dbReference type="PDB" id="7HOG">
    <property type="method" value="X-ray"/>
    <property type="resolution" value="1.19 A"/>
    <property type="chains" value="A=869-1012"/>
</dbReference>
<dbReference type="PDB" id="7HOH">
    <property type="method" value="X-ray"/>
    <property type="resolution" value="1.31 A"/>
    <property type="chains" value="A/B=869-1012"/>
</dbReference>
<dbReference type="PDB" id="7HOI">
    <property type="method" value="X-ray"/>
    <property type="resolution" value="1.61 A"/>
    <property type="chains" value="A=869-1012"/>
</dbReference>
<dbReference type="PDB" id="7HUF">
    <property type="method" value="X-ray"/>
    <property type="resolution" value="1.55 A"/>
    <property type="chains" value="A=869-1012"/>
</dbReference>
<dbReference type="PDB" id="7HUG">
    <property type="method" value="X-ray"/>
    <property type="resolution" value="1.64 A"/>
    <property type="chains" value="A=869-1012"/>
</dbReference>
<dbReference type="PDB" id="7HUH">
    <property type="method" value="X-ray"/>
    <property type="resolution" value="1.52 A"/>
    <property type="chains" value="A/C=869-1012"/>
</dbReference>
<dbReference type="PDB" id="7HUI">
    <property type="method" value="X-ray"/>
    <property type="resolution" value="1.57 A"/>
    <property type="chains" value="A/C=869-1012"/>
</dbReference>
<dbReference type="PDB" id="7HUJ">
    <property type="method" value="X-ray"/>
    <property type="resolution" value="1.56 A"/>
    <property type="chains" value="A/C=869-1012"/>
</dbReference>
<dbReference type="PDB" id="7HUK">
    <property type="method" value="X-ray"/>
    <property type="resolution" value="1.15 A"/>
    <property type="chains" value="A/C=869-1012"/>
</dbReference>
<dbReference type="PDB" id="7HUL">
    <property type="method" value="X-ray"/>
    <property type="resolution" value="1.26 A"/>
    <property type="chains" value="A=869-1012"/>
</dbReference>
<dbReference type="PDB" id="7HUN">
    <property type="method" value="X-ray"/>
    <property type="resolution" value="2.21 A"/>
    <property type="chains" value="A=869-1012"/>
</dbReference>
<dbReference type="PDB" id="7HUO">
    <property type="method" value="X-ray"/>
    <property type="resolution" value="1.54 A"/>
    <property type="chains" value="A=869-1012"/>
</dbReference>
<dbReference type="PDB" id="7HUP">
    <property type="method" value="X-ray"/>
    <property type="resolution" value="1.77 A"/>
    <property type="chains" value="A=869-1012"/>
</dbReference>
<dbReference type="PDB" id="7HUQ">
    <property type="method" value="X-ray"/>
    <property type="resolution" value="1.59 A"/>
    <property type="chains" value="A=869-1012"/>
</dbReference>
<dbReference type="PDB" id="7HUR">
    <property type="method" value="X-ray"/>
    <property type="resolution" value="2.54 A"/>
    <property type="chains" value="A=869-1012"/>
</dbReference>
<dbReference type="PDB" id="7HUS">
    <property type="method" value="X-ray"/>
    <property type="resolution" value="1.69 A"/>
    <property type="chains" value="A=869-1012"/>
</dbReference>
<dbReference type="PDB" id="7HUT">
    <property type="method" value="X-ray"/>
    <property type="resolution" value="1.47 A"/>
    <property type="chains" value="A/C=869-1012"/>
</dbReference>
<dbReference type="PDB" id="7HUU">
    <property type="method" value="X-ray"/>
    <property type="resolution" value="1.67 A"/>
    <property type="chains" value="A=869-1012"/>
</dbReference>
<dbReference type="PDB" id="7HUV">
    <property type="method" value="X-ray"/>
    <property type="resolution" value="1.53 A"/>
    <property type="chains" value="A=869-1012"/>
</dbReference>
<dbReference type="PDB" id="7HUW">
    <property type="method" value="X-ray"/>
    <property type="resolution" value="1.64 A"/>
    <property type="chains" value="A=869-1012"/>
</dbReference>
<dbReference type="PDB" id="7HUX">
    <property type="method" value="X-ray"/>
    <property type="resolution" value="1.89 A"/>
    <property type="chains" value="A=869-1012"/>
</dbReference>
<dbReference type="PDB" id="7HUY">
    <property type="method" value="X-ray"/>
    <property type="resolution" value="1.79 A"/>
    <property type="chains" value="A=869-1012"/>
</dbReference>
<dbReference type="PDB" id="7HUZ">
    <property type="method" value="X-ray"/>
    <property type="resolution" value="1.44 A"/>
    <property type="chains" value="A=869-1012"/>
</dbReference>
<dbReference type="PDB" id="7HV0">
    <property type="method" value="X-ray"/>
    <property type="resolution" value="1.42 A"/>
    <property type="chains" value="A/C=869-1012"/>
</dbReference>
<dbReference type="PDB" id="7HV1">
    <property type="method" value="X-ray"/>
    <property type="resolution" value="1.18 A"/>
    <property type="chains" value="A=869-1012"/>
</dbReference>
<dbReference type="PDB" id="7HV2">
    <property type="method" value="X-ray"/>
    <property type="resolution" value="1.37 A"/>
    <property type="chains" value="A=869-1012"/>
</dbReference>
<dbReference type="PDB" id="7HV3">
    <property type="method" value="X-ray"/>
    <property type="resolution" value="1.91 A"/>
    <property type="chains" value="A=869-1012"/>
</dbReference>
<dbReference type="PDB" id="7HV4">
    <property type="method" value="X-ray"/>
    <property type="resolution" value="1.44 A"/>
    <property type="chains" value="A=869-1012"/>
</dbReference>
<dbReference type="PDB" id="7HV5">
    <property type="method" value="X-ray"/>
    <property type="resolution" value="1.42 A"/>
    <property type="chains" value="A/C=869-1012"/>
</dbReference>
<dbReference type="PDB" id="7HV6">
    <property type="method" value="X-ray"/>
    <property type="resolution" value="1.37 A"/>
    <property type="chains" value="A=869-1012"/>
</dbReference>
<dbReference type="PDB" id="7HV7">
    <property type="method" value="X-ray"/>
    <property type="resolution" value="1.29 A"/>
    <property type="chains" value="A/C=869-1012"/>
</dbReference>
<dbReference type="PDB" id="7HV8">
    <property type="method" value="X-ray"/>
    <property type="resolution" value="1.42 A"/>
    <property type="chains" value="A=869-1012"/>
</dbReference>
<dbReference type="PDB" id="7HV9">
    <property type="method" value="X-ray"/>
    <property type="resolution" value="1.54 A"/>
    <property type="chains" value="A=869-1012"/>
</dbReference>
<dbReference type="PDB" id="7HVA">
    <property type="method" value="X-ray"/>
    <property type="resolution" value="1.19 A"/>
    <property type="chains" value="A/C=869-1012"/>
</dbReference>
<dbReference type="PDB" id="7HVB">
    <property type="method" value="X-ray"/>
    <property type="resolution" value="1.46 A"/>
    <property type="chains" value="A=869-1012"/>
</dbReference>
<dbReference type="PDB" id="7HVC">
    <property type="method" value="X-ray"/>
    <property type="resolution" value="1.35 A"/>
    <property type="chains" value="A=869-1012"/>
</dbReference>
<dbReference type="PDB" id="7HVD">
    <property type="method" value="X-ray"/>
    <property type="resolution" value="1.52 A"/>
    <property type="chains" value="A=869-1012"/>
</dbReference>
<dbReference type="PDB" id="7HVE">
    <property type="method" value="X-ray"/>
    <property type="resolution" value="1.62 A"/>
    <property type="chains" value="A=869-1012"/>
</dbReference>
<dbReference type="PDB" id="7HVF">
    <property type="method" value="X-ray"/>
    <property type="resolution" value="1.49 A"/>
    <property type="chains" value="A/C=869-1012"/>
</dbReference>
<dbReference type="PDB" id="7HVG">
    <property type="method" value="X-ray"/>
    <property type="resolution" value="1.99 A"/>
    <property type="chains" value="A=869-1012"/>
</dbReference>
<dbReference type="PDB" id="7HVH">
    <property type="method" value="X-ray"/>
    <property type="resolution" value="1.61 A"/>
    <property type="chains" value="A=869-1012"/>
</dbReference>
<dbReference type="PDB" id="7HVI">
    <property type="method" value="X-ray"/>
    <property type="resolution" value="1.85 A"/>
    <property type="chains" value="A=869-1012"/>
</dbReference>
<dbReference type="PDB" id="7HVJ">
    <property type="method" value="X-ray"/>
    <property type="resolution" value="1.34 A"/>
    <property type="chains" value="A=869-1012"/>
</dbReference>
<dbReference type="PDB" id="7HVK">
    <property type="method" value="X-ray"/>
    <property type="resolution" value="1.73 A"/>
    <property type="chains" value="A=869-1012"/>
</dbReference>
<dbReference type="PDB" id="7HVL">
    <property type="method" value="X-ray"/>
    <property type="resolution" value="1.40 A"/>
    <property type="chains" value="A/C=869-1012"/>
</dbReference>
<dbReference type="PDB" id="7HVM">
    <property type="method" value="X-ray"/>
    <property type="resolution" value="1.38 A"/>
    <property type="chains" value="A=869-1012"/>
</dbReference>
<dbReference type="PDB" id="7HVN">
    <property type="method" value="X-ray"/>
    <property type="resolution" value="1.38 A"/>
    <property type="chains" value="A/C=869-1012"/>
</dbReference>
<dbReference type="PDB" id="7HVO">
    <property type="method" value="X-ray"/>
    <property type="resolution" value="1.36 A"/>
    <property type="chains" value="A/C=869-1012"/>
</dbReference>
<dbReference type="PDB" id="7HVQ">
    <property type="method" value="X-ray"/>
    <property type="resolution" value="1.46 A"/>
    <property type="chains" value="A=869-1012"/>
</dbReference>
<dbReference type="PDB" id="7HVR">
    <property type="method" value="X-ray"/>
    <property type="resolution" value="1.56 A"/>
    <property type="chains" value="A=869-1012"/>
</dbReference>
<dbReference type="PDB" id="7HVS">
    <property type="method" value="X-ray"/>
    <property type="resolution" value="1.42 A"/>
    <property type="chains" value="A=869-1012"/>
</dbReference>
<dbReference type="PDB" id="7HVT">
    <property type="method" value="X-ray"/>
    <property type="resolution" value="1.16 A"/>
    <property type="chains" value="A/C=869-1012"/>
</dbReference>
<dbReference type="PDB" id="7HVU">
    <property type="method" value="X-ray"/>
    <property type="resolution" value="1.43 A"/>
    <property type="chains" value="A/C=869-1012"/>
</dbReference>
<dbReference type="PDB" id="7HVV">
    <property type="method" value="X-ray"/>
    <property type="resolution" value="1.50 A"/>
    <property type="chains" value="A=869-1012"/>
</dbReference>
<dbReference type="PDB" id="7HVW">
    <property type="method" value="X-ray"/>
    <property type="resolution" value="1.34 A"/>
    <property type="chains" value="A/C=869-1012"/>
</dbReference>
<dbReference type="PDB" id="7HVX">
    <property type="method" value="X-ray"/>
    <property type="resolution" value="1.15 A"/>
    <property type="chains" value="A/C=869-1012"/>
</dbReference>
<dbReference type="PDB" id="7HVY">
    <property type="method" value="X-ray"/>
    <property type="resolution" value="1.19 A"/>
    <property type="chains" value="A/C=869-1012"/>
</dbReference>
<dbReference type="PDB" id="7HVZ">
    <property type="method" value="X-ray"/>
    <property type="resolution" value="1.21 A"/>
    <property type="chains" value="A/C=869-1012"/>
</dbReference>
<dbReference type="PDB" id="7HW0">
    <property type="method" value="X-ray"/>
    <property type="resolution" value="1.58 A"/>
    <property type="chains" value="A=869-1012"/>
</dbReference>
<dbReference type="PDB" id="7HW1">
    <property type="method" value="X-ray"/>
    <property type="resolution" value="1.18 A"/>
    <property type="chains" value="A/C=869-1012"/>
</dbReference>
<dbReference type="PDB" id="7HW3">
    <property type="method" value="X-ray"/>
    <property type="resolution" value="1.54 A"/>
    <property type="chains" value="A=869-1012"/>
</dbReference>
<dbReference type="PDB" id="7HW4">
    <property type="method" value="X-ray"/>
    <property type="resolution" value="1.55 A"/>
    <property type="chains" value="A/C=869-1012"/>
</dbReference>
<dbReference type="PDB" id="7HW5">
    <property type="method" value="X-ray"/>
    <property type="resolution" value="1.41 A"/>
    <property type="chains" value="A=869-1012"/>
</dbReference>
<dbReference type="PDB" id="7HW6">
    <property type="method" value="X-ray"/>
    <property type="resolution" value="1.72 A"/>
    <property type="chains" value="A=869-1012"/>
</dbReference>
<dbReference type="PDB" id="7HW8">
    <property type="method" value="X-ray"/>
    <property type="resolution" value="1.38 A"/>
    <property type="chains" value="A/C=869-1012"/>
</dbReference>
<dbReference type="PDB" id="7HW9">
    <property type="method" value="X-ray"/>
    <property type="resolution" value="1.53 A"/>
    <property type="chains" value="A/C=869-1012"/>
</dbReference>
<dbReference type="PDB" id="7HWA">
    <property type="method" value="X-ray"/>
    <property type="resolution" value="1.38 A"/>
    <property type="chains" value="A=869-1012"/>
</dbReference>
<dbReference type="PDB" id="7HWB">
    <property type="method" value="X-ray"/>
    <property type="resolution" value="1.23 A"/>
    <property type="chains" value="A/C=869-1012"/>
</dbReference>
<dbReference type="PDB" id="7HWC">
    <property type="method" value="X-ray"/>
    <property type="resolution" value="1.46 A"/>
    <property type="chains" value="A/C=869-1012"/>
</dbReference>
<dbReference type="PDB" id="7HWD">
    <property type="method" value="X-ray"/>
    <property type="resolution" value="1.70 A"/>
    <property type="chains" value="A=869-1012"/>
</dbReference>
<dbReference type="PDB" id="7HWE">
    <property type="method" value="X-ray"/>
    <property type="resolution" value="2.11 A"/>
    <property type="chains" value="A=869-1012"/>
</dbReference>
<dbReference type="PDB" id="7HWF">
    <property type="method" value="X-ray"/>
    <property type="resolution" value="1.25 A"/>
    <property type="chains" value="A/C=869-1012"/>
</dbReference>
<dbReference type="PDB" id="7HWG">
    <property type="method" value="X-ray"/>
    <property type="resolution" value="1.29 A"/>
    <property type="chains" value="A/C=869-1012"/>
</dbReference>
<dbReference type="PDB" id="7HWH">
    <property type="method" value="X-ray"/>
    <property type="resolution" value="2.22 A"/>
    <property type="chains" value="A=869-1012"/>
</dbReference>
<dbReference type="PDB" id="7HWI">
    <property type="method" value="X-ray"/>
    <property type="resolution" value="1.92 A"/>
    <property type="chains" value="A=869-1012"/>
</dbReference>
<dbReference type="PDB" id="7HWJ">
    <property type="method" value="X-ray"/>
    <property type="resolution" value="1.37 A"/>
    <property type="chains" value="A=869-1012"/>
</dbReference>
<dbReference type="PDB" id="7HWK">
    <property type="method" value="X-ray"/>
    <property type="resolution" value="1.94 A"/>
    <property type="chains" value="A=869-1012"/>
</dbReference>
<dbReference type="PDB" id="7HWL">
    <property type="method" value="X-ray"/>
    <property type="resolution" value="1.31 A"/>
    <property type="chains" value="A/C=869-1012"/>
</dbReference>
<dbReference type="PDB" id="7HWM">
    <property type="method" value="X-ray"/>
    <property type="resolution" value="1.41 A"/>
    <property type="chains" value="A/C=869-1012"/>
</dbReference>
<dbReference type="PDB" id="7HWN">
    <property type="method" value="X-ray"/>
    <property type="resolution" value="1.38 A"/>
    <property type="chains" value="A=869-1012"/>
</dbReference>
<dbReference type="PDB" id="7HWO">
    <property type="method" value="X-ray"/>
    <property type="resolution" value="1.43 A"/>
    <property type="chains" value="A=869-1012"/>
</dbReference>
<dbReference type="PDB" id="7HWP">
    <property type="method" value="X-ray"/>
    <property type="resolution" value="1.56 A"/>
    <property type="chains" value="A=869-1012"/>
</dbReference>
<dbReference type="PDB" id="7HWQ">
    <property type="method" value="X-ray"/>
    <property type="resolution" value="1.53 A"/>
    <property type="chains" value="A=869-1012"/>
</dbReference>
<dbReference type="PDB" id="7HWR">
    <property type="method" value="X-ray"/>
    <property type="resolution" value="1.68 A"/>
    <property type="chains" value="A=869-1012"/>
</dbReference>
<dbReference type="PDB" id="7HWS">
    <property type="method" value="X-ray"/>
    <property type="resolution" value="1.29 A"/>
    <property type="chains" value="A/C=869-1012"/>
</dbReference>
<dbReference type="PDB" id="7HWT">
    <property type="method" value="X-ray"/>
    <property type="resolution" value="1.41 A"/>
    <property type="chains" value="A=869-1012"/>
</dbReference>
<dbReference type="PDB" id="7HWU">
    <property type="method" value="X-ray"/>
    <property type="resolution" value="1.52 A"/>
    <property type="chains" value="A=869-1012"/>
</dbReference>
<dbReference type="PDB" id="7HWV">
    <property type="method" value="X-ray"/>
    <property type="resolution" value="1.36 A"/>
    <property type="chains" value="A/C=869-1012"/>
</dbReference>
<dbReference type="PDB" id="7HWW">
    <property type="method" value="X-ray"/>
    <property type="resolution" value="1.60 A"/>
    <property type="chains" value="A/C=869-1012"/>
</dbReference>
<dbReference type="PDB" id="7HWX">
    <property type="method" value="X-ray"/>
    <property type="resolution" value="1.29 A"/>
    <property type="chains" value="A/C=869-1012"/>
</dbReference>
<dbReference type="PDB" id="7HWY">
    <property type="method" value="X-ray"/>
    <property type="resolution" value="1.40 A"/>
    <property type="chains" value="A/C=869-1012"/>
</dbReference>
<dbReference type="PDB" id="7HWZ">
    <property type="method" value="X-ray"/>
    <property type="resolution" value="1.39 A"/>
    <property type="chains" value="A/C=869-1012"/>
</dbReference>
<dbReference type="PDB" id="7HX0">
    <property type="method" value="X-ray"/>
    <property type="resolution" value="1.36 A"/>
    <property type="chains" value="A/C=869-1012"/>
</dbReference>
<dbReference type="PDB" id="7HX1">
    <property type="method" value="X-ray"/>
    <property type="resolution" value="1.53 A"/>
    <property type="chains" value="A=869-1012"/>
</dbReference>
<dbReference type="PDB" id="7HX2">
    <property type="method" value="X-ray"/>
    <property type="resolution" value="1.48 A"/>
    <property type="chains" value="A=869-1012"/>
</dbReference>
<dbReference type="PDB" id="7HX3">
    <property type="method" value="X-ray"/>
    <property type="resolution" value="1.25 A"/>
    <property type="chains" value="A/C=869-1012"/>
</dbReference>
<dbReference type="PDB" id="7HX4">
    <property type="method" value="X-ray"/>
    <property type="resolution" value="1.45 A"/>
    <property type="chains" value="A/C=869-1012"/>
</dbReference>
<dbReference type="PDB" id="7HX5">
    <property type="method" value="X-ray"/>
    <property type="resolution" value="1.62 A"/>
    <property type="chains" value="A/C=869-1012"/>
</dbReference>
<dbReference type="PDB" id="7HX6">
    <property type="method" value="X-ray"/>
    <property type="resolution" value="1.30 A"/>
    <property type="chains" value="A/C=869-1012"/>
</dbReference>
<dbReference type="PDB" id="7HX7">
    <property type="method" value="X-ray"/>
    <property type="resolution" value="1.91 A"/>
    <property type="chains" value="A=869-1012"/>
</dbReference>
<dbReference type="PDB" id="7HX8">
    <property type="method" value="X-ray"/>
    <property type="resolution" value="1.70 A"/>
    <property type="chains" value="A/C=869-1012"/>
</dbReference>
<dbReference type="PDB" id="7HX9">
    <property type="method" value="X-ray"/>
    <property type="resolution" value="1.69 A"/>
    <property type="chains" value="A=869-1012"/>
</dbReference>
<dbReference type="PDB" id="7HXA">
    <property type="method" value="X-ray"/>
    <property type="resolution" value="1.52 A"/>
    <property type="chains" value="A/C=869-1012"/>
</dbReference>
<dbReference type="PDB" id="7HXB">
    <property type="method" value="X-ray"/>
    <property type="resolution" value="1.49 A"/>
    <property type="chains" value="A/C=869-1012"/>
</dbReference>
<dbReference type="PDB" id="7HXC">
    <property type="method" value="X-ray"/>
    <property type="resolution" value="1.38 A"/>
    <property type="chains" value="A=869-1012"/>
</dbReference>
<dbReference type="PDB" id="7HXD">
    <property type="method" value="X-ray"/>
    <property type="resolution" value="1.84 A"/>
    <property type="chains" value="A=869-1012"/>
</dbReference>
<dbReference type="PDB" id="7HXE">
    <property type="method" value="X-ray"/>
    <property type="resolution" value="1.78 A"/>
    <property type="chains" value="A=869-1012"/>
</dbReference>
<dbReference type="PDB" id="7HXF">
    <property type="method" value="X-ray"/>
    <property type="resolution" value="1.21 A"/>
    <property type="chains" value="A/C=869-1012"/>
</dbReference>
<dbReference type="PDB" id="7HXG">
    <property type="method" value="X-ray"/>
    <property type="resolution" value="1.54 A"/>
    <property type="chains" value="A/C=869-1012"/>
</dbReference>
<dbReference type="PDB" id="7HXH">
    <property type="method" value="X-ray"/>
    <property type="resolution" value="1.71 A"/>
    <property type="chains" value="A=869-1012"/>
</dbReference>
<dbReference type="PDB" id="7HXI">
    <property type="method" value="X-ray"/>
    <property type="resolution" value="1.42 A"/>
    <property type="chains" value="A/C=869-1012"/>
</dbReference>
<dbReference type="PDB" id="7HXJ">
    <property type="method" value="X-ray"/>
    <property type="resolution" value="1.54 A"/>
    <property type="chains" value="A=869-1012"/>
</dbReference>
<dbReference type="PDB" id="7HXK">
    <property type="method" value="X-ray"/>
    <property type="resolution" value="1.22 A"/>
    <property type="chains" value="A/C=869-1012"/>
</dbReference>
<dbReference type="PDB" id="7HXL">
    <property type="method" value="X-ray"/>
    <property type="resolution" value="1.40 A"/>
    <property type="chains" value="A/C=869-1012"/>
</dbReference>
<dbReference type="PDB" id="7HXM">
    <property type="method" value="X-ray"/>
    <property type="resolution" value="1.61 A"/>
    <property type="chains" value="A/C=869-1012"/>
</dbReference>
<dbReference type="PDB" id="7HXN">
    <property type="method" value="X-ray"/>
    <property type="resolution" value="1.52 A"/>
    <property type="chains" value="A/C=869-1012"/>
</dbReference>
<dbReference type="PDB" id="7HXO">
    <property type="method" value="X-ray"/>
    <property type="resolution" value="1.55 A"/>
    <property type="chains" value="A=869-1012"/>
</dbReference>
<dbReference type="PDB" id="7HXP">
    <property type="method" value="X-ray"/>
    <property type="resolution" value="1.68 A"/>
    <property type="chains" value="A=869-1012"/>
</dbReference>
<dbReference type="PDB" id="7HXQ">
    <property type="method" value="X-ray"/>
    <property type="resolution" value="1.60 A"/>
    <property type="chains" value="A/C=869-1012"/>
</dbReference>
<dbReference type="PDB" id="7HXR">
    <property type="method" value="X-ray"/>
    <property type="resolution" value="1.34 A"/>
    <property type="chains" value="A/C=869-1012"/>
</dbReference>
<dbReference type="PDB" id="7HXS">
    <property type="method" value="X-ray"/>
    <property type="resolution" value="1.29 A"/>
    <property type="chains" value="A/C=869-1012"/>
</dbReference>
<dbReference type="PDB" id="7HXT">
    <property type="method" value="X-ray"/>
    <property type="resolution" value="1.51 A"/>
    <property type="chains" value="A/C=869-1012"/>
</dbReference>
<dbReference type="PDB" id="7HXU">
    <property type="method" value="X-ray"/>
    <property type="resolution" value="1.38 A"/>
    <property type="chains" value="A/C=869-1012"/>
</dbReference>
<dbReference type="PDB" id="7HXV">
    <property type="method" value="X-ray"/>
    <property type="resolution" value="1.53 A"/>
    <property type="chains" value="A=869-1012"/>
</dbReference>
<dbReference type="PDB" id="7HXW">
    <property type="method" value="X-ray"/>
    <property type="resolution" value="1.28 A"/>
    <property type="chains" value="A/C=869-1012"/>
</dbReference>
<dbReference type="PDB" id="7HXX">
    <property type="method" value="X-ray"/>
    <property type="resolution" value="1.32 A"/>
    <property type="chains" value="A/C=869-1012"/>
</dbReference>
<dbReference type="PDB" id="7HXY">
    <property type="method" value="X-ray"/>
    <property type="resolution" value="1.69 A"/>
    <property type="chains" value="A=869-1012"/>
</dbReference>
<dbReference type="PDB" id="7HXZ">
    <property type="method" value="X-ray"/>
    <property type="resolution" value="1.58 A"/>
    <property type="chains" value="A/C=869-1012"/>
</dbReference>
<dbReference type="PDB" id="7HY0">
    <property type="method" value="X-ray"/>
    <property type="resolution" value="1.23 A"/>
    <property type="chains" value="A/C=869-1012"/>
</dbReference>
<dbReference type="PDB" id="7HY1">
    <property type="method" value="X-ray"/>
    <property type="resolution" value="1.44 A"/>
    <property type="chains" value="A=869-1012"/>
</dbReference>
<dbReference type="PDB" id="7HY2">
    <property type="method" value="X-ray"/>
    <property type="resolution" value="1.68 A"/>
    <property type="chains" value="A/C=869-1012"/>
</dbReference>
<dbReference type="PDB" id="7HY3">
    <property type="method" value="X-ray"/>
    <property type="resolution" value="1.61 A"/>
    <property type="chains" value="A=869-1012"/>
</dbReference>
<dbReference type="PDB" id="7HY4">
    <property type="method" value="X-ray"/>
    <property type="resolution" value="1.44 A"/>
    <property type="chains" value="A/C=869-1012"/>
</dbReference>
<dbReference type="PDB" id="7HY5">
    <property type="method" value="X-ray"/>
    <property type="resolution" value="1.92 A"/>
    <property type="chains" value="A=869-1012"/>
</dbReference>
<dbReference type="PDB" id="7HY6">
    <property type="method" value="X-ray"/>
    <property type="resolution" value="1.48 A"/>
    <property type="chains" value="A=869-1012"/>
</dbReference>
<dbReference type="PDB" id="7HY7">
    <property type="method" value="X-ray"/>
    <property type="resolution" value="1.70 A"/>
    <property type="chains" value="A=869-1012"/>
</dbReference>
<dbReference type="PDB" id="7HY8">
    <property type="method" value="X-ray"/>
    <property type="resolution" value="1.54 A"/>
    <property type="chains" value="A/C=869-1012"/>
</dbReference>
<dbReference type="PDB" id="7HY9">
    <property type="method" value="X-ray"/>
    <property type="resolution" value="1.64 A"/>
    <property type="chains" value="A=869-1012"/>
</dbReference>
<dbReference type="PDB" id="7HYA">
    <property type="method" value="X-ray"/>
    <property type="resolution" value="1.80 A"/>
    <property type="chains" value="A=869-1012"/>
</dbReference>
<dbReference type="PDB" id="7HYB">
    <property type="method" value="X-ray"/>
    <property type="resolution" value="1.57 A"/>
    <property type="chains" value="A=869-1012"/>
</dbReference>
<dbReference type="PDB" id="7HYC">
    <property type="method" value="X-ray"/>
    <property type="resolution" value="1.70 A"/>
    <property type="chains" value="A=869-1012"/>
</dbReference>
<dbReference type="PDB" id="7HYD">
    <property type="method" value="X-ray"/>
    <property type="resolution" value="1.44 A"/>
    <property type="chains" value="A/C=869-1012"/>
</dbReference>
<dbReference type="PDB" id="7HYE">
    <property type="method" value="X-ray"/>
    <property type="resolution" value="1.50 A"/>
    <property type="chains" value="A/C=869-1012"/>
</dbReference>
<dbReference type="PDB" id="7HYF">
    <property type="method" value="X-ray"/>
    <property type="resolution" value="1.82 A"/>
    <property type="chains" value="A=869-1012"/>
</dbReference>
<dbReference type="PDB" id="7HYG">
    <property type="method" value="X-ray"/>
    <property type="resolution" value="1.75 A"/>
    <property type="chains" value="A=869-1012"/>
</dbReference>
<dbReference type="PDB" id="7HYH">
    <property type="method" value="X-ray"/>
    <property type="resolution" value="1.49 A"/>
    <property type="chains" value="A=869-1012"/>
</dbReference>
<dbReference type="PDB" id="7HYI">
    <property type="method" value="X-ray"/>
    <property type="resolution" value="1.56 A"/>
    <property type="chains" value="A/C=869-1012"/>
</dbReference>
<dbReference type="PDB" id="7HYJ">
    <property type="method" value="X-ray"/>
    <property type="resolution" value="1.84 A"/>
    <property type="chains" value="A=869-1012"/>
</dbReference>
<dbReference type="PDB" id="7HYK">
    <property type="method" value="X-ray"/>
    <property type="resolution" value="1.83 A"/>
    <property type="chains" value="A=869-1012"/>
</dbReference>
<dbReference type="PDB" id="7HYL">
    <property type="method" value="X-ray"/>
    <property type="resolution" value="1.38 A"/>
    <property type="chains" value="A=869-1012"/>
</dbReference>
<dbReference type="PDB" id="7HYM">
    <property type="method" value="X-ray"/>
    <property type="resolution" value="1.50 A"/>
    <property type="chains" value="A=869-1012"/>
</dbReference>
<dbReference type="PDB" id="7HYN">
    <property type="method" value="X-ray"/>
    <property type="resolution" value="1.29 A"/>
    <property type="chains" value="A/C=869-1012"/>
</dbReference>
<dbReference type="PDB" id="7HYO">
    <property type="method" value="X-ray"/>
    <property type="resolution" value="1.17 A"/>
    <property type="chains" value="A/C=869-1012"/>
</dbReference>
<dbReference type="PDB" id="7HYP">
    <property type="method" value="X-ray"/>
    <property type="resolution" value="1.57 A"/>
    <property type="chains" value="A=869-1012"/>
</dbReference>
<dbReference type="PDB" id="7HYQ">
    <property type="method" value="X-ray"/>
    <property type="resolution" value="1.30 A"/>
    <property type="chains" value="A/C=869-1012"/>
</dbReference>
<dbReference type="PDB" id="7HYR">
    <property type="method" value="X-ray"/>
    <property type="resolution" value="1.57 A"/>
    <property type="chains" value="A=869-1012"/>
</dbReference>
<dbReference type="PDB" id="7HYS">
    <property type="method" value="X-ray"/>
    <property type="resolution" value="1.15 A"/>
    <property type="chains" value="A/C=869-1012"/>
</dbReference>
<dbReference type="PDB" id="7HYT">
    <property type="method" value="X-ray"/>
    <property type="resolution" value="1.60 A"/>
    <property type="chains" value="A=869-1012"/>
</dbReference>
<dbReference type="PDB" id="7HYU">
    <property type="method" value="X-ray"/>
    <property type="resolution" value="1.39 A"/>
    <property type="chains" value="A=869-1012"/>
</dbReference>
<dbReference type="PDB" id="7HYV">
    <property type="method" value="X-ray"/>
    <property type="resolution" value="1.66 A"/>
    <property type="chains" value="A=869-1012"/>
</dbReference>
<dbReference type="PDB" id="7HYW">
    <property type="method" value="X-ray"/>
    <property type="resolution" value="1.48 A"/>
    <property type="chains" value="A=869-1012"/>
</dbReference>
<dbReference type="PDB" id="7HYX">
    <property type="method" value="X-ray"/>
    <property type="resolution" value="1.76 A"/>
    <property type="chains" value="A=869-1012"/>
</dbReference>
<dbReference type="PDB" id="7HYY">
    <property type="method" value="X-ray"/>
    <property type="resolution" value="1.24 A"/>
    <property type="chains" value="A/C=869-1012"/>
</dbReference>
<dbReference type="PDB" id="7HYZ">
    <property type="method" value="X-ray"/>
    <property type="resolution" value="1.52 A"/>
    <property type="chains" value="A/C=869-1012"/>
</dbReference>
<dbReference type="PDB" id="7HZ0">
    <property type="method" value="X-ray"/>
    <property type="resolution" value="1.49 A"/>
    <property type="chains" value="A/C=869-1012"/>
</dbReference>
<dbReference type="PDB" id="7HZ1">
    <property type="method" value="X-ray"/>
    <property type="resolution" value="1.45 A"/>
    <property type="chains" value="A/C=869-1012"/>
</dbReference>
<dbReference type="PDB" id="7HZ2">
    <property type="method" value="X-ray"/>
    <property type="resolution" value="1.20 A"/>
    <property type="chains" value="A/C=869-1012"/>
</dbReference>
<dbReference type="PDB" id="7HZ3">
    <property type="method" value="X-ray"/>
    <property type="resolution" value="1.75 A"/>
    <property type="chains" value="A=869-1012"/>
</dbReference>
<dbReference type="PDB" id="7HZ4">
    <property type="method" value="X-ray"/>
    <property type="resolution" value="1.58 A"/>
    <property type="chains" value="A=869-1012"/>
</dbReference>
<dbReference type="PDB" id="7HZ5">
    <property type="method" value="X-ray"/>
    <property type="resolution" value="1.38 A"/>
    <property type="chains" value="A/C=869-1012"/>
</dbReference>
<dbReference type="PDB" id="7HZ6">
    <property type="method" value="X-ray"/>
    <property type="resolution" value="1.30 A"/>
    <property type="chains" value="A/C=869-1012"/>
</dbReference>
<dbReference type="PDB" id="7HZ7">
    <property type="method" value="X-ray"/>
    <property type="resolution" value="1.51 A"/>
    <property type="chains" value="A=869-1012"/>
</dbReference>
<dbReference type="PDB" id="7HZ8">
    <property type="method" value="X-ray"/>
    <property type="resolution" value="1.53 A"/>
    <property type="chains" value="A=869-1012"/>
</dbReference>
<dbReference type="PDB" id="7HZ9">
    <property type="method" value="X-ray"/>
    <property type="resolution" value="1.54 A"/>
    <property type="chains" value="A=869-1012"/>
</dbReference>
<dbReference type="PDB" id="7HZA">
    <property type="method" value="X-ray"/>
    <property type="resolution" value="1.49 A"/>
    <property type="chains" value="A/C=869-1012"/>
</dbReference>
<dbReference type="PDB" id="7HZB">
    <property type="method" value="X-ray"/>
    <property type="resolution" value="1.47 A"/>
    <property type="chains" value="A/C=869-1012"/>
</dbReference>
<dbReference type="PDB" id="7HZC">
    <property type="method" value="X-ray"/>
    <property type="resolution" value="1.39 A"/>
    <property type="chains" value="A=869-1012"/>
</dbReference>
<dbReference type="PDB" id="7HZD">
    <property type="method" value="X-ray"/>
    <property type="resolution" value="1.76 A"/>
    <property type="chains" value="A=869-1012"/>
</dbReference>
<dbReference type="PDB" id="7HZE">
    <property type="method" value="X-ray"/>
    <property type="resolution" value="1.98 A"/>
    <property type="chains" value="A=869-1012"/>
</dbReference>
<dbReference type="PDB" id="7HZF">
    <property type="method" value="X-ray"/>
    <property type="resolution" value="1.54 A"/>
    <property type="chains" value="A/C=869-1012"/>
</dbReference>
<dbReference type="PDB" id="7HZG">
    <property type="method" value="X-ray"/>
    <property type="resolution" value="1.69 A"/>
    <property type="chains" value="A=869-1012"/>
</dbReference>
<dbReference type="PDB" id="7HZH">
    <property type="method" value="X-ray"/>
    <property type="resolution" value="1.41 A"/>
    <property type="chains" value="A=869-1012"/>
</dbReference>
<dbReference type="PDB" id="7HZI">
    <property type="method" value="X-ray"/>
    <property type="resolution" value="1.81 A"/>
    <property type="chains" value="A=869-1012"/>
</dbReference>
<dbReference type="PDB" id="7HZJ">
    <property type="method" value="X-ray"/>
    <property type="resolution" value="1.28 A"/>
    <property type="chains" value="A=869-1012"/>
</dbReference>
<dbReference type="PDB" id="7HZK">
    <property type="method" value="X-ray"/>
    <property type="resolution" value="1.27 A"/>
    <property type="chains" value="A=869-1012"/>
</dbReference>
<dbReference type="PDB" id="7HZL">
    <property type="method" value="X-ray"/>
    <property type="resolution" value="1.66 A"/>
    <property type="chains" value="A=869-1012"/>
</dbReference>
<dbReference type="PDB" id="7HZM">
    <property type="method" value="X-ray"/>
    <property type="resolution" value="1.19 A"/>
    <property type="chains" value="A=869-1012"/>
</dbReference>
<dbReference type="PDB" id="7HZN">
    <property type="method" value="X-ray"/>
    <property type="resolution" value="1.33 A"/>
    <property type="chains" value="A=869-1012"/>
</dbReference>
<dbReference type="PDB" id="7HZO">
    <property type="method" value="X-ray"/>
    <property type="resolution" value="1.54 A"/>
    <property type="chains" value="A=869-1012"/>
</dbReference>
<dbReference type="PDB" id="7HZP">
    <property type="method" value="X-ray"/>
    <property type="resolution" value="1.60 A"/>
    <property type="chains" value="A=869-1012"/>
</dbReference>
<dbReference type="PDB" id="7HZQ">
    <property type="method" value="X-ray"/>
    <property type="resolution" value="2.06 A"/>
    <property type="chains" value="A=869-1012"/>
</dbReference>
<dbReference type="PDB" id="7HZR">
    <property type="method" value="X-ray"/>
    <property type="resolution" value="1.31 A"/>
    <property type="chains" value="A/C=869-1012"/>
</dbReference>
<dbReference type="PDB" id="7HZS">
    <property type="method" value="X-ray"/>
    <property type="resolution" value="1.23 A"/>
    <property type="chains" value="A/C=869-1012"/>
</dbReference>
<dbReference type="PDB" id="7HZT">
    <property type="method" value="X-ray"/>
    <property type="resolution" value="1.20 A"/>
    <property type="chains" value="A/C=869-1012"/>
</dbReference>
<dbReference type="PDB" id="7HZU">
    <property type="method" value="X-ray"/>
    <property type="resolution" value="1.34 A"/>
    <property type="chains" value="A/C=869-1012"/>
</dbReference>
<dbReference type="PDB" id="8POA">
    <property type="method" value="X-ray"/>
    <property type="resolution" value="1.60 A"/>
    <property type="chains" value="A/B=869-1012"/>
</dbReference>
<dbReference type="PDBsum" id="7H2T"/>
<dbReference type="PDBsum" id="7H2U"/>
<dbReference type="PDBsum" id="7H2V"/>
<dbReference type="PDBsum" id="7H2W"/>
<dbReference type="PDBsum" id="7H2X"/>
<dbReference type="PDBsum" id="7H2Y"/>
<dbReference type="PDBsum" id="7H2Z"/>
<dbReference type="PDBsum" id="7H30"/>
<dbReference type="PDBsum" id="7H31"/>
<dbReference type="PDBsum" id="7H32"/>
<dbReference type="PDBsum" id="7H33"/>
<dbReference type="PDBsum" id="7H34"/>
<dbReference type="PDBsum" id="7H35"/>
<dbReference type="PDBsum" id="7H36"/>
<dbReference type="PDBsum" id="7H37"/>
<dbReference type="PDBsum" id="7H38"/>
<dbReference type="PDBsum" id="7H39"/>
<dbReference type="PDBsum" id="7H3A"/>
<dbReference type="PDBsum" id="7H3B"/>
<dbReference type="PDBsum" id="7H3C"/>
<dbReference type="PDBsum" id="7H3D"/>
<dbReference type="PDBsum" id="7H3E"/>
<dbReference type="PDBsum" id="7H3F"/>
<dbReference type="PDBsum" id="7H3G"/>
<dbReference type="PDBsum" id="7H3H"/>
<dbReference type="PDBsum" id="7H3I"/>
<dbReference type="PDBsum" id="7H3J"/>
<dbReference type="PDBsum" id="7H3K"/>
<dbReference type="PDBsum" id="7H3L"/>
<dbReference type="PDBsum" id="7H3M"/>
<dbReference type="PDBsum" id="7H3N"/>
<dbReference type="PDBsum" id="7H3O"/>
<dbReference type="PDBsum" id="7H3P"/>
<dbReference type="PDBsum" id="7H3Q"/>
<dbReference type="PDBsum" id="7H3R"/>
<dbReference type="PDBsum" id="7H3S"/>
<dbReference type="PDBsum" id="7H3T"/>
<dbReference type="PDBsum" id="7H3U"/>
<dbReference type="PDBsum" id="7H3V"/>
<dbReference type="PDBsum" id="7H3W"/>
<dbReference type="PDBsum" id="7H3X"/>
<dbReference type="PDBsum" id="7H3Y"/>
<dbReference type="PDBsum" id="7H3Z"/>
<dbReference type="PDBsum" id="7H40"/>
<dbReference type="PDBsum" id="7H41"/>
<dbReference type="PDBsum" id="7H42"/>
<dbReference type="PDBsum" id="7H43"/>
<dbReference type="PDBsum" id="7H44"/>
<dbReference type="PDBsum" id="7H45"/>
<dbReference type="PDBsum" id="7H46"/>
<dbReference type="PDBsum" id="7H47"/>
<dbReference type="PDBsum" id="7H48"/>
<dbReference type="PDBsum" id="7H49"/>
<dbReference type="PDBsum" id="7H4A"/>
<dbReference type="PDBsum" id="7H4B"/>
<dbReference type="PDBsum" id="7H4C"/>
<dbReference type="PDBsum" id="7H4D"/>
<dbReference type="PDBsum" id="7H4E"/>
<dbReference type="PDBsum" id="7H4F"/>
<dbReference type="PDBsum" id="7H4G"/>
<dbReference type="PDBsum" id="7H4H"/>
<dbReference type="PDBsum" id="7H4I"/>
<dbReference type="PDBsum" id="7H4J"/>
<dbReference type="PDBsum" id="7H4K"/>
<dbReference type="PDBsum" id="7H4L"/>
<dbReference type="PDBsum" id="7H4M"/>
<dbReference type="PDBsum" id="7H4N"/>
<dbReference type="PDBsum" id="7H4O"/>
<dbReference type="PDBsum" id="7H4P"/>
<dbReference type="PDBsum" id="7H4Q"/>
<dbReference type="PDBsum" id="7H4R"/>
<dbReference type="PDBsum" id="7H4S"/>
<dbReference type="PDBsum" id="7H4T"/>
<dbReference type="PDBsum" id="7H4U"/>
<dbReference type="PDBsum" id="7H4V"/>
<dbReference type="PDBsum" id="7H4W"/>
<dbReference type="PDBsum" id="7H4X"/>
<dbReference type="PDBsum" id="7H4Y"/>
<dbReference type="PDBsum" id="7H4Z"/>
<dbReference type="PDBsum" id="7H50"/>
<dbReference type="PDBsum" id="7H51"/>
<dbReference type="PDBsum" id="7H52"/>
<dbReference type="PDBsum" id="7H53"/>
<dbReference type="PDBsum" id="7H54"/>
<dbReference type="PDBsum" id="7H55"/>
<dbReference type="PDBsum" id="7HOC"/>
<dbReference type="PDBsum" id="7HOD"/>
<dbReference type="PDBsum" id="7HOE"/>
<dbReference type="PDBsum" id="7HOF"/>
<dbReference type="PDBsum" id="7HOG"/>
<dbReference type="PDBsum" id="7HOH"/>
<dbReference type="PDBsum" id="7HOI"/>
<dbReference type="PDBsum" id="7HUF"/>
<dbReference type="PDBsum" id="7HUG"/>
<dbReference type="PDBsum" id="7HUH"/>
<dbReference type="PDBsum" id="7HUI"/>
<dbReference type="PDBsum" id="7HUJ"/>
<dbReference type="PDBsum" id="7HUK"/>
<dbReference type="PDBsum" id="7HUL"/>
<dbReference type="PDBsum" id="7HUN"/>
<dbReference type="PDBsum" id="7HUO"/>
<dbReference type="PDBsum" id="7HUP"/>
<dbReference type="PDBsum" id="7HUQ"/>
<dbReference type="PDBsum" id="7HUR"/>
<dbReference type="PDBsum" id="7HUS"/>
<dbReference type="PDBsum" id="7HUT"/>
<dbReference type="PDBsum" id="7HUU"/>
<dbReference type="PDBsum" id="7HUV"/>
<dbReference type="PDBsum" id="7HUW"/>
<dbReference type="PDBsum" id="7HUX"/>
<dbReference type="PDBsum" id="7HUY"/>
<dbReference type="PDBsum" id="7HUZ"/>
<dbReference type="PDBsum" id="7HV0"/>
<dbReference type="PDBsum" id="7HV1"/>
<dbReference type="PDBsum" id="7HV2"/>
<dbReference type="PDBsum" id="7HV3"/>
<dbReference type="PDBsum" id="7HV4"/>
<dbReference type="PDBsum" id="7HV5"/>
<dbReference type="PDBsum" id="7HV6"/>
<dbReference type="PDBsum" id="7HV7"/>
<dbReference type="PDBsum" id="7HV8"/>
<dbReference type="PDBsum" id="7HV9"/>
<dbReference type="PDBsum" id="7HVA"/>
<dbReference type="PDBsum" id="7HVB"/>
<dbReference type="PDBsum" id="7HVC"/>
<dbReference type="PDBsum" id="7HVD"/>
<dbReference type="PDBsum" id="7HVE"/>
<dbReference type="PDBsum" id="7HVF"/>
<dbReference type="PDBsum" id="7HVG"/>
<dbReference type="PDBsum" id="7HVH"/>
<dbReference type="PDBsum" id="7HVI"/>
<dbReference type="PDBsum" id="7HVJ"/>
<dbReference type="PDBsum" id="7HVK"/>
<dbReference type="PDBsum" id="7HVL"/>
<dbReference type="PDBsum" id="7HVM"/>
<dbReference type="PDBsum" id="7HVN"/>
<dbReference type="PDBsum" id="7HVO"/>
<dbReference type="PDBsum" id="7HVQ"/>
<dbReference type="PDBsum" id="7HVR"/>
<dbReference type="PDBsum" id="7HVS"/>
<dbReference type="PDBsum" id="7HVT"/>
<dbReference type="PDBsum" id="7HVU"/>
<dbReference type="PDBsum" id="7HVV"/>
<dbReference type="PDBsum" id="7HVW"/>
<dbReference type="PDBsum" id="7HVX"/>
<dbReference type="PDBsum" id="7HVY"/>
<dbReference type="PDBsum" id="7HVZ"/>
<dbReference type="PDBsum" id="7HW0"/>
<dbReference type="PDBsum" id="7HW1"/>
<dbReference type="PDBsum" id="7HW3"/>
<dbReference type="PDBsum" id="7HW4"/>
<dbReference type="PDBsum" id="7HW5"/>
<dbReference type="PDBsum" id="7HW6"/>
<dbReference type="PDBsum" id="7HW8"/>
<dbReference type="PDBsum" id="7HW9"/>
<dbReference type="PDBsum" id="7HWA"/>
<dbReference type="PDBsum" id="7HWB"/>
<dbReference type="PDBsum" id="7HWC"/>
<dbReference type="PDBsum" id="7HWD"/>
<dbReference type="PDBsum" id="7HWE"/>
<dbReference type="PDBsum" id="7HWF"/>
<dbReference type="PDBsum" id="7HWG"/>
<dbReference type="PDBsum" id="7HWH"/>
<dbReference type="PDBsum" id="7HWI"/>
<dbReference type="PDBsum" id="7HWJ"/>
<dbReference type="PDBsum" id="7HWK"/>
<dbReference type="PDBsum" id="7HWL"/>
<dbReference type="PDBsum" id="7HWM"/>
<dbReference type="PDBsum" id="7HWN"/>
<dbReference type="PDBsum" id="7HWO"/>
<dbReference type="PDBsum" id="7HWP"/>
<dbReference type="PDBsum" id="7HWQ"/>
<dbReference type="PDBsum" id="7HWR"/>
<dbReference type="PDBsum" id="7HWS"/>
<dbReference type="PDBsum" id="7HWT"/>
<dbReference type="PDBsum" id="7HWU"/>
<dbReference type="PDBsum" id="7HWV"/>
<dbReference type="PDBsum" id="7HWW"/>
<dbReference type="PDBsum" id="7HWX"/>
<dbReference type="PDBsum" id="7HWY"/>
<dbReference type="PDBsum" id="7HWZ"/>
<dbReference type="PDBsum" id="7HX0"/>
<dbReference type="PDBsum" id="7HX1"/>
<dbReference type="PDBsum" id="7HX2"/>
<dbReference type="PDBsum" id="7HX3"/>
<dbReference type="PDBsum" id="7HX4"/>
<dbReference type="PDBsum" id="7HX5"/>
<dbReference type="PDBsum" id="7HX6"/>
<dbReference type="PDBsum" id="7HX7"/>
<dbReference type="PDBsum" id="7HX8"/>
<dbReference type="PDBsum" id="7HX9"/>
<dbReference type="PDBsum" id="7HXA"/>
<dbReference type="PDBsum" id="7HXB"/>
<dbReference type="PDBsum" id="7HXC"/>
<dbReference type="PDBsum" id="7HXD"/>
<dbReference type="PDBsum" id="7HXE"/>
<dbReference type="PDBsum" id="7HXF"/>
<dbReference type="PDBsum" id="7HXG"/>
<dbReference type="PDBsum" id="7HXH"/>
<dbReference type="PDBsum" id="7HXI"/>
<dbReference type="PDBsum" id="7HXJ"/>
<dbReference type="PDBsum" id="7HXK"/>
<dbReference type="PDBsum" id="7HXL"/>
<dbReference type="PDBsum" id="7HXM"/>
<dbReference type="PDBsum" id="7HXN"/>
<dbReference type="PDBsum" id="7HXO"/>
<dbReference type="PDBsum" id="7HXP"/>
<dbReference type="PDBsum" id="7HXQ"/>
<dbReference type="PDBsum" id="7HXR"/>
<dbReference type="PDBsum" id="7HXS"/>
<dbReference type="PDBsum" id="7HXT"/>
<dbReference type="PDBsum" id="7HXU"/>
<dbReference type="PDBsum" id="7HXV"/>
<dbReference type="PDBsum" id="7HXW"/>
<dbReference type="PDBsum" id="7HXX"/>
<dbReference type="PDBsum" id="7HXY"/>
<dbReference type="PDBsum" id="7HXZ"/>
<dbReference type="PDBsum" id="7HY0"/>
<dbReference type="PDBsum" id="7HY1"/>
<dbReference type="PDBsum" id="7HY2"/>
<dbReference type="PDBsum" id="7HY3"/>
<dbReference type="PDBsum" id="7HY4"/>
<dbReference type="PDBsum" id="7HY5"/>
<dbReference type="PDBsum" id="7HY6"/>
<dbReference type="PDBsum" id="7HY7"/>
<dbReference type="PDBsum" id="7HY8"/>
<dbReference type="PDBsum" id="7HY9"/>
<dbReference type="PDBsum" id="7HYA"/>
<dbReference type="PDBsum" id="7HYB"/>
<dbReference type="PDBsum" id="7HYC"/>
<dbReference type="PDBsum" id="7HYD"/>
<dbReference type="PDBsum" id="7HYE"/>
<dbReference type="PDBsum" id="7HYF"/>
<dbReference type="PDBsum" id="7HYG"/>
<dbReference type="PDBsum" id="7HYH"/>
<dbReference type="PDBsum" id="7HYI"/>
<dbReference type="PDBsum" id="7HYJ"/>
<dbReference type="PDBsum" id="7HYK"/>
<dbReference type="PDBsum" id="7HYL"/>
<dbReference type="PDBsum" id="7HYM"/>
<dbReference type="PDBsum" id="7HYN"/>
<dbReference type="PDBsum" id="7HYO"/>
<dbReference type="PDBsum" id="7HYP"/>
<dbReference type="PDBsum" id="7HYQ"/>
<dbReference type="PDBsum" id="7HYR"/>
<dbReference type="PDBsum" id="7HYS"/>
<dbReference type="PDBsum" id="7HYT"/>
<dbReference type="PDBsum" id="7HYU"/>
<dbReference type="PDBsum" id="7HYV"/>
<dbReference type="PDBsum" id="7HYW"/>
<dbReference type="PDBsum" id="7HYX"/>
<dbReference type="PDBsum" id="7HYY"/>
<dbReference type="PDBsum" id="7HYZ"/>
<dbReference type="PDBsum" id="7HZ0"/>
<dbReference type="PDBsum" id="7HZ1"/>
<dbReference type="PDBsum" id="7HZ2"/>
<dbReference type="PDBsum" id="7HZ3"/>
<dbReference type="PDBsum" id="7HZ4"/>
<dbReference type="PDBsum" id="7HZ5"/>
<dbReference type="PDBsum" id="7HZ6"/>
<dbReference type="PDBsum" id="7HZ7"/>
<dbReference type="PDBsum" id="7HZ8"/>
<dbReference type="PDBsum" id="7HZ9"/>
<dbReference type="PDBsum" id="7HZA"/>
<dbReference type="PDBsum" id="7HZB"/>
<dbReference type="PDBsum" id="7HZC"/>
<dbReference type="PDBsum" id="7HZD"/>
<dbReference type="PDBsum" id="7HZE"/>
<dbReference type="PDBsum" id="7HZF"/>
<dbReference type="PDBsum" id="7HZG"/>
<dbReference type="PDBsum" id="7HZH"/>
<dbReference type="PDBsum" id="7HZI"/>
<dbReference type="PDBsum" id="7HZJ"/>
<dbReference type="PDBsum" id="7HZK"/>
<dbReference type="PDBsum" id="7HZL"/>
<dbReference type="PDBsum" id="7HZM"/>
<dbReference type="PDBsum" id="7HZN"/>
<dbReference type="PDBsum" id="7HZO"/>
<dbReference type="PDBsum" id="7HZP"/>
<dbReference type="PDBsum" id="7HZQ"/>
<dbReference type="PDBsum" id="7HZR"/>
<dbReference type="PDBsum" id="7HZS"/>
<dbReference type="PDBsum" id="7HZT"/>
<dbReference type="PDBsum" id="7HZU"/>
<dbReference type="PDBsum" id="8POA"/>
<dbReference type="SMR" id="Q65900"/>
<dbReference type="MEROPS" id="C03.014"/>
<dbReference type="MEROPS" id="N08.001"/>
<dbReference type="GeneID" id="1461111"/>
<dbReference type="KEGG" id="vg:1461111"/>
<dbReference type="Proteomes" id="UP000007757">
    <property type="component" value="Segment"/>
</dbReference>
<dbReference type="GO" id="GO:0044162">
    <property type="term" value="C:host cell cytoplasmic vesicle membrane"/>
    <property type="evidence" value="ECO:0007669"/>
    <property type="project" value="UniProtKB-SubCell"/>
</dbReference>
<dbReference type="GO" id="GO:0042025">
    <property type="term" value="C:host cell nucleus"/>
    <property type="evidence" value="ECO:0007669"/>
    <property type="project" value="UniProtKB-SubCell"/>
</dbReference>
<dbReference type="GO" id="GO:0016020">
    <property type="term" value="C:membrane"/>
    <property type="evidence" value="ECO:0007669"/>
    <property type="project" value="UniProtKB-KW"/>
</dbReference>
<dbReference type="GO" id="GO:0039618">
    <property type="term" value="C:T=pseudo3 icosahedral viral capsid"/>
    <property type="evidence" value="ECO:0007669"/>
    <property type="project" value="UniProtKB-KW"/>
</dbReference>
<dbReference type="GO" id="GO:0005524">
    <property type="term" value="F:ATP binding"/>
    <property type="evidence" value="ECO:0007669"/>
    <property type="project" value="UniProtKB-KW"/>
</dbReference>
<dbReference type="GO" id="GO:0016887">
    <property type="term" value="F:ATP hydrolysis activity"/>
    <property type="evidence" value="ECO:0007669"/>
    <property type="project" value="InterPro"/>
</dbReference>
<dbReference type="GO" id="GO:0015267">
    <property type="term" value="F:channel activity"/>
    <property type="evidence" value="ECO:0007669"/>
    <property type="project" value="UniProtKB-KW"/>
</dbReference>
<dbReference type="GO" id="GO:0004197">
    <property type="term" value="F:cysteine-type endopeptidase activity"/>
    <property type="evidence" value="ECO:0007669"/>
    <property type="project" value="UniProtKB-EC"/>
</dbReference>
<dbReference type="GO" id="GO:0003723">
    <property type="term" value="F:RNA binding"/>
    <property type="evidence" value="ECO:0007669"/>
    <property type="project" value="UniProtKB-KW"/>
</dbReference>
<dbReference type="GO" id="GO:0003724">
    <property type="term" value="F:RNA helicase activity"/>
    <property type="evidence" value="ECO:0007669"/>
    <property type="project" value="InterPro"/>
</dbReference>
<dbReference type="GO" id="GO:0003968">
    <property type="term" value="F:RNA-directed RNA polymerase activity"/>
    <property type="evidence" value="ECO:0007669"/>
    <property type="project" value="UniProtKB-KW"/>
</dbReference>
<dbReference type="GO" id="GO:0005198">
    <property type="term" value="F:structural molecule activity"/>
    <property type="evidence" value="ECO:0007669"/>
    <property type="project" value="InterPro"/>
</dbReference>
<dbReference type="GO" id="GO:0008270">
    <property type="term" value="F:zinc ion binding"/>
    <property type="evidence" value="ECO:0007669"/>
    <property type="project" value="UniProtKB-KW"/>
</dbReference>
<dbReference type="GO" id="GO:0006260">
    <property type="term" value="P:DNA replication"/>
    <property type="evidence" value="ECO:0007669"/>
    <property type="project" value="UniProtKB-KW"/>
</dbReference>
<dbReference type="GO" id="GO:0006351">
    <property type="term" value="P:DNA-templated transcription"/>
    <property type="evidence" value="ECO:0007669"/>
    <property type="project" value="InterPro"/>
</dbReference>
<dbReference type="GO" id="GO:0075509">
    <property type="term" value="P:endocytosis involved in viral entry into host cell"/>
    <property type="evidence" value="ECO:0007669"/>
    <property type="project" value="UniProtKB-KW"/>
</dbReference>
<dbReference type="GO" id="GO:0034220">
    <property type="term" value="P:monoatomic ion transmembrane transport"/>
    <property type="evidence" value="ECO:0007669"/>
    <property type="project" value="UniProtKB-KW"/>
</dbReference>
<dbReference type="GO" id="GO:0006508">
    <property type="term" value="P:proteolysis"/>
    <property type="evidence" value="ECO:0007669"/>
    <property type="project" value="UniProtKB-KW"/>
</dbReference>
<dbReference type="GO" id="GO:0044694">
    <property type="term" value="P:symbiont genome entry into host cell via pore formation in plasma membrane"/>
    <property type="evidence" value="ECO:0007669"/>
    <property type="project" value="UniProtKB-KW"/>
</dbReference>
<dbReference type="GO" id="GO:0039520">
    <property type="term" value="P:symbiont-mediated activation of host autophagy"/>
    <property type="evidence" value="ECO:0000250"/>
    <property type="project" value="UniProtKB"/>
</dbReference>
<dbReference type="GO" id="GO:0039554">
    <property type="term" value="P:symbiont-mediated suppression of host cytoplasmic pattern recognition receptor signaling pathway via inhibition of MDA-5 activity"/>
    <property type="evidence" value="ECO:0007669"/>
    <property type="project" value="UniProtKB-KW"/>
</dbReference>
<dbReference type="GO" id="GO:0039522">
    <property type="term" value="P:symbiont-mediated suppression of host mRNA export from nucleus"/>
    <property type="evidence" value="ECO:0007669"/>
    <property type="project" value="UniProtKB-KW"/>
</dbReference>
<dbReference type="GO" id="GO:0085034">
    <property type="term" value="P:symbiont-mediated suppression of host NF-kappaB cascade"/>
    <property type="evidence" value="ECO:0007669"/>
    <property type="project" value="UniProtKB-KW"/>
</dbReference>
<dbReference type="GO" id="GO:0039694">
    <property type="term" value="P:viral RNA genome replication"/>
    <property type="evidence" value="ECO:0007669"/>
    <property type="project" value="InterPro"/>
</dbReference>
<dbReference type="GO" id="GO:0019062">
    <property type="term" value="P:virion attachment to host cell"/>
    <property type="evidence" value="ECO:0007669"/>
    <property type="project" value="UniProtKB-KW"/>
</dbReference>
<dbReference type="CDD" id="cd23213">
    <property type="entry name" value="Enterovirus_RdRp"/>
    <property type="match status" value="1"/>
</dbReference>
<dbReference type="CDD" id="cd00205">
    <property type="entry name" value="rhv_like"/>
    <property type="match status" value="3"/>
</dbReference>
<dbReference type="FunFam" id="1.20.960.20:FF:000001">
    <property type="entry name" value="Genome polyprotein"/>
    <property type="match status" value="1"/>
</dbReference>
<dbReference type="FunFam" id="2.40.10.10:FF:000018">
    <property type="entry name" value="Genome polyprotein"/>
    <property type="match status" value="1"/>
</dbReference>
<dbReference type="FunFam" id="2.40.10.10:FF:000020">
    <property type="entry name" value="Genome polyprotein"/>
    <property type="match status" value="1"/>
</dbReference>
<dbReference type="FunFam" id="2.40.10.10:FF:000022">
    <property type="entry name" value="Genome polyprotein"/>
    <property type="match status" value="1"/>
</dbReference>
<dbReference type="FunFam" id="2.60.120.20:FF:000001">
    <property type="entry name" value="Genome polyprotein"/>
    <property type="match status" value="1"/>
</dbReference>
<dbReference type="FunFam" id="2.60.120.20:FF:000002">
    <property type="entry name" value="Genome polyprotein"/>
    <property type="match status" value="1"/>
</dbReference>
<dbReference type="FunFam" id="2.60.120.20:FF:000003">
    <property type="entry name" value="Genome polyprotein"/>
    <property type="match status" value="1"/>
</dbReference>
<dbReference type="FunFam" id="3.30.70.270:FF:000008">
    <property type="entry name" value="Genome polyprotein"/>
    <property type="match status" value="1"/>
</dbReference>
<dbReference type="FunFam" id="4.10.880.10:FF:000001">
    <property type="entry name" value="Genome polyprotein"/>
    <property type="match status" value="1"/>
</dbReference>
<dbReference type="FunFam" id="4.10.880.10:FF:000002">
    <property type="entry name" value="Genome polyprotein"/>
    <property type="match status" value="1"/>
</dbReference>
<dbReference type="Gene3D" id="1.20.960.20">
    <property type="match status" value="1"/>
</dbReference>
<dbReference type="Gene3D" id="2.60.120.20">
    <property type="match status" value="3"/>
</dbReference>
<dbReference type="Gene3D" id="3.30.70.270">
    <property type="match status" value="1"/>
</dbReference>
<dbReference type="Gene3D" id="6.10.20.20">
    <property type="entry name" value="Poliovirus 3A protein-like"/>
    <property type="match status" value="1"/>
</dbReference>
<dbReference type="Gene3D" id="4.10.880.10">
    <property type="entry name" value="Poliovirus 3D polymerase Domain 1 (Nucleotidyltransferase)"/>
    <property type="match status" value="2"/>
</dbReference>
<dbReference type="Gene3D" id="2.40.10.10">
    <property type="entry name" value="Trypsin-like serine proteases"/>
    <property type="match status" value="4"/>
</dbReference>
<dbReference type="InterPro" id="IPR003593">
    <property type="entry name" value="AAA+_ATPase"/>
</dbReference>
<dbReference type="InterPro" id="IPR043502">
    <property type="entry name" value="DNA/RNA_pol_sf"/>
</dbReference>
<dbReference type="InterPro" id="IPR000605">
    <property type="entry name" value="Helicase_SF3_ssDNA/RNA_vir"/>
</dbReference>
<dbReference type="InterPro" id="IPR014759">
    <property type="entry name" value="Helicase_SF3_ssRNA_vir"/>
</dbReference>
<dbReference type="InterPro" id="IPR027417">
    <property type="entry name" value="P-loop_NTPase"/>
</dbReference>
<dbReference type="InterPro" id="IPR014838">
    <property type="entry name" value="P3A"/>
</dbReference>
<dbReference type="InterPro" id="IPR036203">
    <property type="entry name" value="P3A_soluble_dom"/>
</dbReference>
<dbReference type="InterPro" id="IPR044067">
    <property type="entry name" value="PCV_3C_PRO"/>
</dbReference>
<dbReference type="InterPro" id="IPR000081">
    <property type="entry name" value="Peptidase_C3"/>
</dbReference>
<dbReference type="InterPro" id="IPR000199">
    <property type="entry name" value="Peptidase_C3A/C3B_picornavir"/>
</dbReference>
<dbReference type="InterPro" id="IPR009003">
    <property type="entry name" value="Peptidase_S1_PA"/>
</dbReference>
<dbReference type="InterPro" id="IPR043504">
    <property type="entry name" value="Peptidase_S1_PA_chymotrypsin"/>
</dbReference>
<dbReference type="InterPro" id="IPR003138">
    <property type="entry name" value="Pico_P1A"/>
</dbReference>
<dbReference type="InterPro" id="IPR002527">
    <property type="entry name" value="Pico_P2B"/>
</dbReference>
<dbReference type="InterPro" id="IPR001676">
    <property type="entry name" value="Picornavirus_capsid"/>
</dbReference>
<dbReference type="InterPro" id="IPR043128">
    <property type="entry name" value="Rev_trsase/Diguanyl_cyclase"/>
</dbReference>
<dbReference type="InterPro" id="IPR033703">
    <property type="entry name" value="Rhv-like"/>
</dbReference>
<dbReference type="InterPro" id="IPR001205">
    <property type="entry name" value="RNA-dir_pol_C"/>
</dbReference>
<dbReference type="InterPro" id="IPR007094">
    <property type="entry name" value="RNA-dir_pol_PSvirus"/>
</dbReference>
<dbReference type="InterPro" id="IPR029053">
    <property type="entry name" value="Viral_coat"/>
</dbReference>
<dbReference type="Pfam" id="PF08727">
    <property type="entry name" value="P3A"/>
    <property type="match status" value="1"/>
</dbReference>
<dbReference type="Pfam" id="PF00548">
    <property type="entry name" value="Peptidase_C3"/>
    <property type="match status" value="1"/>
</dbReference>
<dbReference type="Pfam" id="PF02226">
    <property type="entry name" value="Pico_P1A"/>
    <property type="match status" value="1"/>
</dbReference>
<dbReference type="Pfam" id="PF00947">
    <property type="entry name" value="Pico_P2A"/>
    <property type="match status" value="1"/>
</dbReference>
<dbReference type="Pfam" id="PF01552">
    <property type="entry name" value="Pico_P2B"/>
    <property type="match status" value="1"/>
</dbReference>
<dbReference type="Pfam" id="PF00680">
    <property type="entry name" value="RdRP_1"/>
    <property type="match status" value="1"/>
</dbReference>
<dbReference type="Pfam" id="PF00073">
    <property type="entry name" value="Rhv"/>
    <property type="match status" value="2"/>
</dbReference>
<dbReference type="Pfam" id="PF22663">
    <property type="entry name" value="Rhv_5"/>
    <property type="match status" value="1"/>
</dbReference>
<dbReference type="Pfam" id="PF00910">
    <property type="entry name" value="RNA_helicase"/>
    <property type="match status" value="1"/>
</dbReference>
<dbReference type="SMART" id="SM00382">
    <property type="entry name" value="AAA"/>
    <property type="match status" value="1"/>
</dbReference>
<dbReference type="SUPFAM" id="SSF56672">
    <property type="entry name" value="DNA/RNA polymerases"/>
    <property type="match status" value="1"/>
</dbReference>
<dbReference type="SUPFAM" id="SSF52540">
    <property type="entry name" value="P-loop containing nucleoside triphosphate hydrolases"/>
    <property type="match status" value="1"/>
</dbReference>
<dbReference type="SUPFAM" id="SSF88633">
    <property type="entry name" value="Positive stranded ssRNA viruses"/>
    <property type="match status" value="2"/>
</dbReference>
<dbReference type="SUPFAM" id="SSF89043">
    <property type="entry name" value="Soluble domain of poliovirus core protein 3a"/>
    <property type="match status" value="1"/>
</dbReference>
<dbReference type="SUPFAM" id="SSF50494">
    <property type="entry name" value="Trypsin-like serine proteases"/>
    <property type="match status" value="2"/>
</dbReference>
<dbReference type="PROSITE" id="PS51874">
    <property type="entry name" value="PCV_3C_PRO"/>
    <property type="match status" value="1"/>
</dbReference>
<dbReference type="PROSITE" id="PS50507">
    <property type="entry name" value="RDRP_SSRNA_POS"/>
    <property type="match status" value="1"/>
</dbReference>
<dbReference type="PROSITE" id="PS51218">
    <property type="entry name" value="SF3_HELICASE_2"/>
    <property type="match status" value="1"/>
</dbReference>
<keyword id="KW-0002">3D-structure</keyword>
<keyword id="KW-1072">Activation of host autophagy by virus</keyword>
<keyword id="KW-0067">ATP-binding</keyword>
<keyword id="KW-0068">Autocatalytic cleavage</keyword>
<keyword id="KW-0167">Capsid protein</keyword>
<keyword id="KW-0191">Covalent protein-RNA linkage</keyword>
<keyword id="KW-0235">DNA replication</keyword>
<keyword id="KW-1262">Eukaryotic host gene expression shutoff by virus</keyword>
<keyword id="KW-1193">Eukaryotic host translation shutoff by virus</keyword>
<keyword id="KW-0347">Helicase</keyword>
<keyword id="KW-1035">Host cytoplasm</keyword>
<keyword id="KW-1036">Host cytoplasmic vesicle</keyword>
<keyword id="KW-1190">Host gene expression shutoff by virus</keyword>
<keyword id="KW-1043">Host membrane</keyword>
<keyword id="KW-1192">Host mRNA suppression by virus</keyword>
<keyword id="KW-1048">Host nucleus</keyword>
<keyword id="KW-0945">Host-virus interaction</keyword>
<keyword id="KW-0378">Hydrolase</keyword>
<keyword id="KW-1090">Inhibition of host innate immune response by virus</keyword>
<keyword id="KW-1089">Inhibition of host MDA5 by virus</keyword>
<keyword id="KW-1099">Inhibition of host mRNA nuclear export by virus</keyword>
<keyword id="KW-1100">Inhibition of host NF-kappa-B by virus</keyword>
<keyword id="KW-1113">Inhibition of host RLR pathway by virus</keyword>
<keyword id="KW-0407">Ion channel</keyword>
<keyword id="KW-0406">Ion transport</keyword>
<keyword id="KW-0449">Lipoprotein</keyword>
<keyword id="KW-0460">Magnesium</keyword>
<keyword id="KW-0472">Membrane</keyword>
<keyword id="KW-0479">Metal-binding</keyword>
<keyword id="KW-0519">Myristate</keyword>
<keyword id="KW-0547">Nucleotide-binding</keyword>
<keyword id="KW-0548">Nucleotidyltransferase</keyword>
<keyword id="KW-0597">Phosphoprotein</keyword>
<keyword id="KW-1172">Pore-mediated penetration of viral genome into host cell</keyword>
<keyword id="KW-0645">Protease</keyword>
<keyword id="KW-0677">Repeat</keyword>
<keyword id="KW-0694">RNA-binding</keyword>
<keyword id="KW-0696">RNA-directed RNA polymerase</keyword>
<keyword id="KW-1143">T=pseudo3 icosahedral capsid protein</keyword>
<keyword id="KW-0788">Thiol protease</keyword>
<keyword id="KW-0808">Transferase</keyword>
<keyword id="KW-0813">Transport</keyword>
<keyword id="KW-1161">Viral attachment to host cell</keyword>
<keyword id="KW-0899">Viral immunoevasion</keyword>
<keyword id="KW-1182">Viral ion channel</keyword>
<keyword id="KW-1162">Viral penetration into host cytoplasm</keyword>
<keyword id="KW-0693">Viral RNA replication</keyword>
<keyword id="KW-0946">Virion</keyword>
<keyword id="KW-1164">Virus endocytosis by host</keyword>
<keyword id="KW-1160">Virus entry into host cell</keyword>
<keyword id="KW-0862">Zinc</keyword>
<keyword id="KW-0863">Zinc-finger</keyword>
<name>POLG_CX16G</name>
<feature type="initiator methionine" description="Removed; by host" evidence="2">
    <location>
        <position position="1"/>
    </location>
</feature>
<feature type="chain" id="PRO_0000426179" description="Genome polyprotein">
    <location>
        <begin position="2"/>
        <end position="2193"/>
    </location>
</feature>
<feature type="chain" id="PRO_0000426180" description="P1">
    <location>
        <begin position="2"/>
        <end position="862"/>
    </location>
</feature>
<feature type="chain" id="PRO_0000426181" description="Capsid protein VP0">
    <location>
        <begin position="2"/>
        <end position="323"/>
    </location>
</feature>
<feature type="chain" id="PRO_0000426182" description="Capsid protein VP4">
    <location>
        <begin position="2"/>
        <end position="69"/>
    </location>
</feature>
<feature type="chain" id="PRO_0000426183" description="Capsid protein VP2">
    <location>
        <begin position="70"/>
        <end position="323"/>
    </location>
</feature>
<feature type="chain" id="PRO_0000426184" description="Capsid protein VP3">
    <location>
        <begin position="324"/>
        <end position="565"/>
    </location>
</feature>
<feature type="chain" id="PRO_0000426185" description="Capsid protein VP1">
    <location>
        <begin position="566"/>
        <end position="862"/>
    </location>
</feature>
<feature type="chain" id="PRO_0000426186" description="P2">
    <location>
        <begin position="863"/>
        <end position="1440"/>
    </location>
</feature>
<feature type="chain" id="PRO_0000039518" description="Protease 2A">
    <location>
        <begin position="863"/>
        <end position="1012"/>
    </location>
</feature>
<feature type="chain" id="PRO_0000039519" description="Protein 2B">
    <location>
        <begin position="1013"/>
        <end position="1111"/>
    </location>
</feature>
<feature type="chain" id="PRO_0000039520" description="Protein 2C">
    <location>
        <begin position="1112"/>
        <end position="1440"/>
    </location>
</feature>
<feature type="chain" id="PRO_0000426187" description="P3">
    <location>
        <begin position="1441"/>
        <end position="2193"/>
    </location>
</feature>
<feature type="chain" id="PRO_0000426188" description="Protein 3AB">
    <location>
        <begin position="1441"/>
        <end position="1548"/>
    </location>
</feature>
<feature type="chain" id="PRO_0000039521" description="Protein 3A">
    <location>
        <begin position="1441"/>
        <end position="1526"/>
    </location>
</feature>
<feature type="chain" id="PRO_0000426189" description="Viral protein genome-linked">
    <location>
        <begin position="1527"/>
        <end position="1548"/>
    </location>
</feature>
<feature type="chain" id="PRO_0000426190" description="Protein 3CD">
    <location>
        <begin position="1549"/>
        <end position="2193"/>
    </location>
</feature>
<feature type="chain" id="PRO_0000426191" description="Protease 3C">
    <location>
        <begin position="1549"/>
        <end position="1731"/>
    </location>
</feature>
<feature type="chain" id="PRO_0000426192" description="RNA-directed RNA polymerase">
    <location>
        <begin position="1732"/>
        <end position="2193"/>
    </location>
</feature>
<feature type="topological domain" description="Cytoplasmic" evidence="8">
    <location>
        <begin position="2"/>
        <end position="1503"/>
    </location>
</feature>
<feature type="intramembrane region" evidence="8">
    <location>
        <begin position="1504"/>
        <end position="1519"/>
    </location>
</feature>
<feature type="topological domain" description="Cytoplasmic" evidence="8">
    <location>
        <begin position="1520"/>
        <end position="2193"/>
    </location>
</feature>
<feature type="domain" description="SF3 helicase" evidence="10">
    <location>
        <begin position="1216"/>
        <end position="1374"/>
    </location>
</feature>
<feature type="domain" description="Peptidase C3" evidence="11">
    <location>
        <begin position="1549"/>
        <end position="1727"/>
    </location>
</feature>
<feature type="domain" description="RdRp catalytic" evidence="9">
    <location>
        <begin position="1958"/>
        <end position="2073"/>
    </location>
</feature>
<feature type="zinc finger region" description="C4-type; degenerate" evidence="1">
    <location>
        <begin position="1381"/>
        <end position="1397"/>
    </location>
</feature>
<feature type="region of interest" description="Disordered" evidence="12">
    <location>
        <begin position="1"/>
        <end position="22"/>
    </location>
</feature>
<feature type="region of interest" description="Amphipathic alpha-helix" evidence="8">
    <location>
        <begin position="566"/>
        <end position="588"/>
    </location>
</feature>
<feature type="region of interest" description="Amphipathic alpha-helix" evidence="8">
    <location>
        <begin position="568"/>
        <end position="588"/>
    </location>
</feature>
<feature type="region of interest" description="Oligomerization" evidence="2">
    <location>
        <begin position="1112"/>
        <end position="1250"/>
    </location>
</feature>
<feature type="region of interest" description="Membrane-binding" evidence="2">
    <location>
        <begin position="1112"/>
        <end position="1184"/>
    </location>
</feature>
<feature type="region of interest" description="RNA-binding" evidence="2">
    <location>
        <begin position="1133"/>
        <end position="1137"/>
    </location>
</feature>
<feature type="region of interest" description="RNA-binding" evidence="2">
    <location>
        <begin position="1424"/>
        <end position="1431"/>
    </location>
</feature>
<feature type="region of interest" description="Oligomerization" evidence="2">
    <location>
        <begin position="1435"/>
        <end position="1440"/>
    </location>
</feature>
<feature type="active site" description="For protease 2A activity" evidence="2">
    <location>
        <position position="883"/>
    </location>
</feature>
<feature type="active site" description="For protease 2A activity" evidence="2">
    <location>
        <position position="901"/>
    </location>
</feature>
<feature type="active site" description="For protease 2A activity" evidence="2">
    <location>
        <position position="972"/>
    </location>
</feature>
<feature type="active site" description="For protease 3C activity" evidence="11">
    <location>
        <position position="1588"/>
    </location>
</feature>
<feature type="active site" description="For protease 3C activity" evidence="11">
    <location>
        <position position="1619"/>
    </location>
</feature>
<feature type="active site" description="For protease 3C activity" evidence="11">
    <location>
        <position position="1695"/>
    </location>
</feature>
<feature type="binding site" evidence="7">
    <location>
        <position position="918"/>
    </location>
    <ligand>
        <name>Zn(2+)</name>
        <dbReference type="ChEBI" id="CHEBI:29105"/>
        <label>1</label>
        <note>structural</note>
    </ligand>
</feature>
<feature type="binding site" evidence="7">
    <location>
        <position position="920"/>
    </location>
    <ligand>
        <name>Zn(2+)</name>
        <dbReference type="ChEBI" id="CHEBI:29105"/>
        <label>1</label>
        <note>structural</note>
    </ligand>
</feature>
<feature type="binding site" evidence="7">
    <location>
        <position position="978"/>
    </location>
    <ligand>
        <name>Zn(2+)</name>
        <dbReference type="ChEBI" id="CHEBI:29105"/>
        <label>1</label>
        <note>structural</note>
    </ligand>
</feature>
<feature type="binding site" evidence="7">
    <location>
        <position position="980"/>
    </location>
    <ligand>
        <name>Zn(2+)</name>
        <dbReference type="ChEBI" id="CHEBI:29105"/>
        <label>1</label>
        <note>structural</note>
    </ligand>
</feature>
<feature type="binding site" evidence="10">
    <location>
        <begin position="1240"/>
        <end position="1247"/>
    </location>
    <ligand>
        <name>ATP</name>
        <dbReference type="ChEBI" id="CHEBI:30616"/>
    </ligand>
</feature>
<feature type="binding site" evidence="1">
    <location>
        <position position="1381"/>
    </location>
    <ligand>
        <name>Zn(2+)</name>
        <dbReference type="ChEBI" id="CHEBI:29105"/>
        <label>2</label>
    </ligand>
</feature>
<feature type="binding site" evidence="1">
    <location>
        <position position="1392"/>
    </location>
    <ligand>
        <name>Zn(2+)</name>
        <dbReference type="ChEBI" id="CHEBI:29105"/>
        <label>2</label>
    </ligand>
</feature>
<feature type="binding site" evidence="1">
    <location>
        <position position="1397"/>
    </location>
    <ligand>
        <name>Zn(2+)</name>
        <dbReference type="ChEBI" id="CHEBI:29105"/>
        <label>2</label>
    </ligand>
</feature>
<feature type="binding site" evidence="2">
    <location>
        <position position="1964"/>
    </location>
    <ligand>
        <name>Mg(2+)</name>
        <dbReference type="ChEBI" id="CHEBI:18420"/>
        <label>1</label>
        <note>catalytic; for RdRp activity</note>
    </ligand>
</feature>
<feature type="binding site" evidence="2">
    <location>
        <position position="1964"/>
    </location>
    <ligand>
        <name>Mg(2+)</name>
        <dbReference type="ChEBI" id="CHEBI:18420"/>
        <label>2</label>
        <note>catalytic; for RdRp activity</note>
    </ligand>
</feature>
<feature type="binding site" evidence="2">
    <location>
        <position position="2060"/>
    </location>
    <ligand>
        <name>Mg(2+)</name>
        <dbReference type="ChEBI" id="CHEBI:18420"/>
        <label>1</label>
        <note>catalytic; for RdRp activity</note>
    </ligand>
</feature>
<feature type="binding site" evidence="2">
    <location>
        <position position="2060"/>
    </location>
    <ligand>
        <name>Mg(2+)</name>
        <dbReference type="ChEBI" id="CHEBI:18420"/>
        <label>2</label>
        <note>catalytic; for RdRp activity</note>
    </ligand>
</feature>
<feature type="site" description="Cleavage; by autolysis" evidence="2">
    <location>
        <begin position="69"/>
        <end position="70"/>
    </location>
</feature>
<feature type="site" description="Cleavage; by protease 3C" evidence="3">
    <location>
        <begin position="323"/>
        <end position="324"/>
    </location>
</feature>
<feature type="site" description="Cleavage; by autolysis" evidence="3">
    <location>
        <begin position="862"/>
        <end position="863"/>
    </location>
</feature>
<feature type="site" description="Cleavage; by protease 3C" evidence="3">
    <location>
        <begin position="1012"/>
        <end position="1013"/>
    </location>
</feature>
<feature type="site" description="Cleavage; by protease 3C" evidence="3">
    <location>
        <begin position="1111"/>
        <end position="1112"/>
    </location>
</feature>
<feature type="site" description="Involved in the interaction with host RTN3" evidence="6">
    <location>
        <position position="1136"/>
    </location>
</feature>
<feature type="site" description="Cleavage; by protease 3C" evidence="3">
    <location>
        <begin position="1440"/>
        <end position="1441"/>
    </location>
</feature>
<feature type="site" description="Cleavage; by protease 3C" evidence="3">
    <location>
        <begin position="1526"/>
        <end position="1527"/>
    </location>
</feature>
<feature type="site" description="Cleavage; by protease 3C" evidence="3">
    <location>
        <begin position="1548"/>
        <end position="1549"/>
    </location>
</feature>
<feature type="site" description="Cleavage; by protease 3C" evidence="3">
    <location>
        <begin position="1731"/>
        <end position="1732"/>
    </location>
</feature>
<feature type="modified residue" description="O-(5'-phospho-RNA)-tyrosine" evidence="2">
    <location>
        <position position="1529"/>
    </location>
</feature>
<feature type="lipid moiety-binding region" description="N-myristoyl glycine; by host" evidence="2">
    <location>
        <position position="2"/>
    </location>
</feature>
<feature type="strand" evidence="15">
    <location>
        <begin position="872"/>
        <end position="874"/>
    </location>
</feature>
<feature type="strand" evidence="15">
    <location>
        <begin position="877"/>
        <end position="881"/>
    </location>
</feature>
<feature type="helix" evidence="15">
    <location>
        <begin position="882"/>
        <end position="884"/>
    </location>
</feature>
<feature type="helix" evidence="15">
    <location>
        <begin position="887"/>
        <end position="891"/>
    </location>
</feature>
<feature type="strand" evidence="15">
    <location>
        <begin position="893"/>
        <end position="897"/>
    </location>
</feature>
<feature type="turn" evidence="15">
    <location>
        <begin position="898"/>
        <end position="901"/>
    </location>
</feature>
<feature type="strand" evidence="15">
    <location>
        <begin position="902"/>
        <end position="906"/>
    </location>
</feature>
<feature type="strand" evidence="15">
    <location>
        <begin position="922"/>
        <end position="927"/>
    </location>
</feature>
<feature type="helix" evidence="15">
    <location>
        <begin position="928"/>
        <end position="930"/>
    </location>
</feature>
<feature type="strand" evidence="15">
    <location>
        <begin position="932"/>
        <end position="937"/>
    </location>
</feature>
<feature type="strand" evidence="15">
    <location>
        <begin position="941"/>
        <end position="946"/>
    </location>
</feature>
<feature type="strand" evidence="15">
    <location>
        <begin position="950"/>
        <end position="952"/>
    </location>
</feature>
<feature type="strand" evidence="15">
    <location>
        <begin position="954"/>
        <end position="965"/>
    </location>
</feature>
<feature type="helix" evidence="15">
    <location>
        <begin position="969"/>
        <end position="971"/>
    </location>
</feature>
<feature type="strand" evidence="15">
    <location>
        <begin position="975"/>
        <end position="978"/>
    </location>
</feature>
<feature type="strand" evidence="15">
    <location>
        <begin position="981"/>
        <end position="988"/>
    </location>
</feature>
<feature type="strand" evidence="15">
    <location>
        <begin position="993"/>
        <end position="998"/>
    </location>
</feature>
<feature type="helix" evidence="15">
    <location>
        <begin position="1003"/>
        <end position="1006"/>
    </location>
</feature>
<sequence>MGSQVSTQRSGSHENSNSASEGSTINYTTINYYKDAYAASAGRQDMSQDPKKFTDPVMDVIHEMAPPLKSPSAEACGYSDRVAQLTIGNSTITTQEAANIIIAYGEWPEYCKDADATAVDKPTRPDVSVNRFFTLDTKSWAKDSKGWYWKFPDVLTEVGVFGQNAQFHYLYRSGFCVHVQCNASKFHQGALLVAILPEYVLGTIAGGDGNENSHPPYVTTQPGQVGAVLTNPYVLDAGVPLSQLTVCPHQWINLRTNNCATIIVPYMNTVPFDSALNHCNFGLIVVPVVPLDFNAGATSEIPITVTIAPMCAEFAGLRQAIKQGIPTELKPGTNQFLTTDDGVSAPILPGFHPTPAIHIPGEVRNLLEICRVETILEVNNLQSNETTPMQRLCFPVSVQSKTGELCAVFRADPGRNGPWQSTILGQLCRYYTQWSGSLEVTFMFAGSFMATGKMLIAYTPPGGGVPADRLTAMLGTHVIWDFGLQSSVTLVIPWISNTHYRAHAKDGYFDYYTTGTITIWYQTNYVVPIGAPTTAYIVALAAAQDNFTMKLCKDTEDIEQSANIQGDGIADMIDQAVTSRVGRALTSLQVEPTAANTNASEHRLGTGLVPALQAAETGASSNAQDENLIETRCVLNHHSTQETTIGNFFSRAGLVSIITMPTTGTQNTDGYVNWDIDLMGYAQMRRKCELFTYMRFDAEFTFVAAKPNGELVPQLLQYMYVPPGAPKPTSRDSFAWQTATNPSIFVKLTDPPAQVSVPFMSPASAYQWFYDGYPTFGAHPQSNDADYGQCPNNMMGTFSIRTVGTEKSPHSITLRVYMRIKHVRAWIPRPLRNQPYLFKTNPNYKGNDIKCTSTSRDKITTLGKFGQQSGAIYVGNYRVVNRHLATHNDWANLVWEDSSRDLLVSSTTAQGCDTIARCDCQTGVYYCSSRRKHYPVSFSKPSLIFVEASEYYPARYQSHLMLAVGHSEPGDCGGILRCQHGVVGIVSTGGNGLVGFADVRDLLWLDEEAMEQGVSDYIKGLGDAFGTGFTDAVSREVEALKNHLIGSEGAVEKILKNLIKLISALVIVIRSDYDMVTLTATLALIGCHGSPWAWIKAKTASILGIPIAQKQSASWLKKFNDMANAAKGLEWISNKISKFIDWLKEKIIPAAKEKVEFLNNLKQLPLLENQISNLEQSAASQEDLEAMFGNVSYLAHFCRKFQPLYATEAKRVYALEKRMNNYMQFKSKHRIEPVCLIIRGSPGTGKSLATGIIARAIADKYHSSVYSLPPDPDHFDGYKQQVVTVMDDLCQNPDGKDMSLFCQMVSTVDFIPPMASLEEKGVSFTSKFVIASTNASNIIVPTVSDSDAIRRRFYMDCDIEVTDSYKTDLGRLDAGRAARLCSENNTANFKRCSPLVCGKAIQLRDRKSKVRYSVDTVVSELIREYNNRYAIGNTIEALFQGPPKFRPIRISLEEKPAPDAISDLLASVDSEEVRQYCRDQGWIIPETPTNVERHLNRAVLIMQSIATVVAVVSLVYVIYKLFAGFQGAYSGAPKQTLKKPILRTATVQGPSLDFALSLLRRNIRQVQTDQGHFTMLGVRDRLAVLPRHSQPGKTIWVEHKLINILDAVELVDEQGVNLELTLVTLDTNEKFRDITKFIPENISAASDATLVINTEHMPSMFVPVGDVVQYGFLNLSGKPTHRTMMYNFPTKAGQCGGVVTSVGKVIGIHIGGNGRQGFCAGLKRSYFASEQGEIQWVKPNKETGRLNINGPTRTKLEPSVFHDVFEGNKEPAVLHSRDPRLEVDFEQALFSKYVGNTLHEPDEYIKEAALHYANQLKQLDINTSQMSMEEACYGTENLEAIDLHTSAGYPYSALGIKKRDILDPTTRDVSKMKFYMDKYGLDLPYSTYVKDELRSIDKIKKGKSRLIEASSLNDSVYLRMAFGHLYETFHANPGTITGSAVGCNPDTFWSKLPILLPGSLFAFDYSGYDASLSPVWFRALELVLREVGYSEEAVSLIEGINHTHHVYRNKTYCVLGGMPSGCSGTSIFNSMINNIIIRTLLIKTFKGIDLDELNMVAYGDDVLASYPFPIDCLELARTGKEYGLTMTPADKSPCFNEVNWGNATFLKRGFLPDEQFPFLIHPTMPMKEIHESIRWTKDARNTQDHVRSLCLLAWHNGKQEYEKFVSTIRSVPVGKALAIPNYENLRRNWLELF</sequence>
<accession>Q65900</accession>
<organismHost>
    <name type="scientific">Homo sapiens</name>
    <name type="common">Human</name>
    <dbReference type="NCBI Taxonomy" id="9606"/>
</organismHost>
<evidence type="ECO:0000250" key="1">
    <source>
        <dbReference type="UniProtKB" id="B9VUU3"/>
    </source>
</evidence>
<evidence type="ECO:0000250" key="2">
    <source>
        <dbReference type="UniProtKB" id="P03300"/>
    </source>
</evidence>
<evidence type="ECO:0000250" key="3">
    <source>
        <dbReference type="UniProtKB" id="P03301"/>
    </source>
</evidence>
<evidence type="ECO:0000250" key="4">
    <source>
        <dbReference type="UniProtKB" id="P03303"/>
    </source>
</evidence>
<evidence type="ECO:0000250" key="5">
    <source>
        <dbReference type="UniProtKB" id="P03313"/>
    </source>
</evidence>
<evidence type="ECO:0000250" key="6">
    <source>
        <dbReference type="UniProtKB" id="Q66478"/>
    </source>
</evidence>
<evidence type="ECO:0000250" key="7">
    <source>
        <dbReference type="UniProtKB" id="Q9QF31"/>
    </source>
</evidence>
<evidence type="ECO:0000255" key="8"/>
<evidence type="ECO:0000255" key="9">
    <source>
        <dbReference type="PROSITE-ProRule" id="PRU00539"/>
    </source>
</evidence>
<evidence type="ECO:0000255" key="10">
    <source>
        <dbReference type="PROSITE-ProRule" id="PRU00551"/>
    </source>
</evidence>
<evidence type="ECO:0000255" key="11">
    <source>
        <dbReference type="PROSITE-ProRule" id="PRU01222"/>
    </source>
</evidence>
<evidence type="ECO:0000256" key="12">
    <source>
        <dbReference type="SAM" id="MobiDB-lite"/>
    </source>
</evidence>
<evidence type="ECO:0000269" key="13">
    <source>
    </source>
</evidence>
<evidence type="ECO:0000305" key="14"/>
<evidence type="ECO:0007829" key="15">
    <source>
        <dbReference type="PDB" id="7H47"/>
    </source>
</evidence>
<reference key="1">
    <citation type="journal article" date="1994" name="Virology">
        <title>Molecular analysis of coxsackievirus A16 reveals a new genetic group of enteroviruses.</title>
        <authorList>
            <person name="Poyry T."/>
            <person name="Hyypiae T."/>
            <person name="Horsnell C."/>
            <person name="Kinnunen L."/>
            <person name="Hovi T."/>
            <person name="Stanway G."/>
        </authorList>
    </citation>
    <scope>NUCLEOTIDE SEQUENCE [GENOMIC RNA]</scope>
</reference>
<reference key="2">
    <citation type="journal article" date="2019" name="PLoS Pathog.">
        <title>Convergent evolution in the mechanisms of ACBD3 recruitment to picornavirus replication sites.</title>
        <authorList>
            <person name="Horova V."/>
            <person name="Lyoo H."/>
            <person name="Rozycki B."/>
            <person name="Chalupska D."/>
            <person name="Smola M."/>
            <person name="Humpolickova J."/>
            <person name="Strating J.R.P.M."/>
            <person name="van Kuppeveld F.J.M."/>
            <person name="Boura E."/>
            <person name="Klima M."/>
        </authorList>
    </citation>
    <scope>INTERACTION WITH HOST ACBD3 (PROTEIN 3A)</scope>
</reference>
<organism>
    <name type="scientific">Coxsackievirus A16 (strain G-10)</name>
    <dbReference type="NCBI Taxonomy" id="69159"/>
    <lineage>
        <taxon>Viruses</taxon>
        <taxon>Riboviria</taxon>
        <taxon>Orthornavirae</taxon>
        <taxon>Pisuviricota</taxon>
        <taxon>Pisoniviricetes</taxon>
        <taxon>Picornavirales</taxon>
        <taxon>Picornaviridae</taxon>
        <taxon>Ensavirinae</taxon>
        <taxon>Enterovirus</taxon>
        <taxon>Enterovirus A</taxon>
    </lineage>
</organism>
<proteinExistence type="evidence at protein level"/>
<comment type="function">
    <molecule>Capsid protein VP1</molecule>
    <text evidence="2">Forms an icosahedral capsid of pseudo T=3 symmetry with capsid proteins VP2 and VP3 (By similarity). The capsid is 300 Angstroms in diameter, composed of 60 copies of each capsid protein and enclosing the viral positive strand RNA genome (By similarity). Capsid protein VP1 mainly forms the vertices of the capsid (By similarity). Capsid protein VP1 interacts with host cell receptor to provide virion attachment to target host cells. This attachment induces virion internalization (By similarity). After binding to its receptor, the capsid undergoes conformational changes (By similarity). Capsid protein VP1 N-terminus (that contains an amphipathic alpha-helix) and capsid protein VP4 are externalized (By similarity). Together, they shape a pore in the host membrane through which viral genome is translocated to host cell cytoplasm (By similarity).</text>
</comment>
<comment type="function">
    <molecule>Capsid protein VP2</molecule>
    <text evidence="2">Forms an icosahedral capsid of pseudo T=3 symmetry with capsid proteins VP2 and VP3 (By similarity). The capsid is 300 Angstroms in diameter, composed of 60 copies of each capsid protein and enclosing the viral positive strand RNA genome (By similarity).</text>
</comment>
<comment type="function">
    <molecule>Capsid protein VP3</molecule>
    <text evidence="2">Forms an icosahedral capsid of pseudo T=3 symmetry with capsid proteins VP2 and VP3 (By similarity). The capsid is 300 Angstroms in diameter, composed of 60 copies of each capsid protein and enclosing the viral positive strand RNA genome (By similarity).</text>
</comment>
<comment type="function">
    <molecule>Capsid protein VP4</molecule>
    <text evidence="2">Lies on the inner surface of the capsid shell (By similarity). After binding to the host receptor, the capsid undergoes conformational changes (By similarity). Capsid protein VP4 is released, Capsid protein VP1 N-terminus is externalized, and together, they shape a pore in the host membrane through which the viral genome is translocated into the host cell cytoplasm (By similarity).</text>
</comment>
<comment type="function">
    <molecule>Capsid protein VP0</molecule>
    <text evidence="2">Component of immature procapsids, which is cleaved into capsid proteins VP4 and VP2 after maturation (By similarity). Allows the capsid to remain inactive before the maturation step (By similarity).</text>
</comment>
<comment type="function">
    <molecule>Protease 2A</molecule>
    <text evidence="2 3 5">Cysteine protease that cleaves viral polyprotein and specific host proteins (By similarity). It is responsible for the autocatalytic cleavage between the P1 and P2 regions, which is the first cleavage occurring in the polyprotein (By similarity). Also cleaves the host translation initiation factor EIF4G1, in order to shut down the capped cellular mRNA translation (By similarity). Inhibits the host nucleus-cytoplasm protein and RNA trafficking by cleaving host members of the nuclear pores (By similarity). Counteracts stress granule formation probably by antagonizing its assembly or promoting its dissassembly (By similarity). Cleaves and inhibits host IFIH1/MDA5, thereby inhibiting the type-I IFN production and the establishment of the antiviral state (By similarity). Cleaves and inhibits host MAVS, thereby inhibiting the type-I IFN production and the establishment of the antiviral state (By similarity).</text>
</comment>
<comment type="function">
    <molecule>Protein 2B</molecule>
    <text evidence="2">Plays an essential role in the virus replication cycle by acting as a viroporin. Creates a pore in the host endoplasmic reticulum and as a consequence releases Ca2+ in the cytoplasm of infected cell. In turn, high levels of cytoplasmic calcium may trigger membrane trafficking and transport of viral ER-associated proteins to viroplasms, sites of viral genome replication.</text>
</comment>
<comment type="function">
    <molecule>Protein 2C</molecule>
    <text evidence="2">Induces and associates with structural rearrangements of intracellular membranes. Displays RNA-binding, nucleotide binding and NTPase activities. May play a role in virion morphogenesis and viral RNA encapsidation by interacting with the capsid protein VP3.</text>
</comment>
<comment type="function">
    <molecule>Protein 3AB</molecule>
    <text evidence="2">Localizes the viral replication complex to the surface of membranous vesicles. Together with protein 3CD binds the Cis-Active RNA Element (CRE) which is involved in RNA synthesis initiation. Acts as a cofactor to stimulate the activity of 3D polymerase, maybe through a nucleid acid chaperone activity.</text>
</comment>
<comment type="function">
    <molecule>Protein 3A</molecule>
    <text evidence="2 13">Localizes the viral replication complex to the surface of membranous vesicles (By similarity). It inhibits host cell endoplasmic reticulum-to-Golgi apparatus transport and causes the disassembly of the Golgi complex, possibly through GBF1 interaction (By similarity). This would result in depletion of MHC, trail receptors and IFN receptors at the host cell surface (By similarity). Plays an essential role in viral RNA replication by recruiting ACBD3 and PI4KB at the viral replication sites, thereby allowing the formation of the rearranged membranous structures where viral replication takes place (PubMed:31381608).</text>
</comment>
<comment type="function">
    <molecule>Viral protein genome-linked</molecule>
    <text evidence="2">Acts as a primer for viral RNA replication and remains covalently bound to viral genomic RNA. VPg is uridylylated prior to priming replication into VPg-pUpU. The oriI viral genomic sequence may act as a template for this. The VPg-pUpU is then used as primer on the genomic RNA poly(A) by the RNA-dependent RNA polymerase to replicate the viral genome. During genome replication, the VPg-RNA linkage is removed by the host TDP2, thereby accelerating replication. During the late stage of the replication cycle, host TDP2 is excluded from sites of viral RNA synthesis and encapsidation, allowing for the generation of progeny virions.</text>
</comment>
<comment type="function">
    <molecule>Protein 3CD</molecule>
    <text evidence="2">Involved in the viral replication complex and viral polypeptide maturation. It exhibits protease activity with a specificity and catalytic efficiency that is different from protease 3C. Protein 3CD lacks polymerase activity. Protein 3CD binds to the 5'UTR of the viral genome.</text>
</comment>
<comment type="function">
    <molecule>Protease 3C</molecule>
    <text evidence="2 4 7">Major viral protease that mediates proteolytic processing of the polyprotein (By similarity). Cleaves host EIF5B, contributing to host translation shutoff (By similarity). Also cleaves host PABPC1, contributing to host translation shutoff (By similarity). Binds and inhibits host IFIH1/MDA5, thereby inhibiting the type-I IFN production and the establishment of the antiviral state (By similarity). Cleaves host MAP3K7/TAK1, resulting in inhibition of TRAF6-triggered NF-kappa-B induction (By similarity). Cleaves host NLRP1, triggers host N-glycine-mediated degradation of the autoinhibitory NLRP1 N-terminal fragment (By similarity).</text>
</comment>
<comment type="function">
    <molecule>RNA-directed RNA polymerase</molecule>
    <text evidence="2">Replicates the viral genomic RNA on the surface of intracellular membranes. May form linear arrays of subunits that propagate along a strong head-to-tail interaction called interface-I. Covalently attaches UMP to a tyrosine of VPg, which is used to prime RNA synthesis. The positive stranded RNA genome is first replicated at virus induced membranous vesicles, creating a dsRNA genomic replication form. This dsRNA is then used as template to synthesize positive stranded RNA genomes. ss(+)RNA genomes are either translated, replicated or encapsidated.</text>
</comment>
<comment type="catalytic activity">
    <molecule>Protein 2C</molecule>
    <reaction evidence="2">
        <text>a ribonucleoside 5'-triphosphate + H2O = a ribonucleoside 5'-diphosphate + phosphate + H(+)</text>
        <dbReference type="Rhea" id="RHEA:23680"/>
        <dbReference type="ChEBI" id="CHEBI:15377"/>
        <dbReference type="ChEBI" id="CHEBI:15378"/>
        <dbReference type="ChEBI" id="CHEBI:43474"/>
        <dbReference type="ChEBI" id="CHEBI:57930"/>
        <dbReference type="ChEBI" id="CHEBI:61557"/>
        <dbReference type="EC" id="3.6.1.15"/>
    </reaction>
</comment>
<comment type="catalytic activity">
    <molecule>Protease 2A</molecule>
    <reaction evidence="2">
        <text>Selective cleavage of Tyr-|-Gly bond in the picornavirus polyprotein.</text>
        <dbReference type="EC" id="3.4.22.29"/>
    </reaction>
</comment>
<comment type="catalytic activity">
    <molecule>RNA-directed RNA polymerase</molecule>
    <reaction evidence="9">
        <text>RNA(n) + a ribonucleoside 5'-triphosphate = RNA(n+1) + diphosphate</text>
        <dbReference type="Rhea" id="RHEA:21248"/>
        <dbReference type="Rhea" id="RHEA-COMP:14527"/>
        <dbReference type="Rhea" id="RHEA-COMP:17342"/>
        <dbReference type="ChEBI" id="CHEBI:33019"/>
        <dbReference type="ChEBI" id="CHEBI:61557"/>
        <dbReference type="ChEBI" id="CHEBI:140395"/>
        <dbReference type="EC" id="2.7.7.48"/>
    </reaction>
</comment>
<comment type="catalytic activity">
    <molecule>Protease 3C</molecule>
    <reaction evidence="11">
        <text>Selective cleavage of Gln-|-Gly bond in the poliovirus polyprotein. In other picornavirus reactions Glu may be substituted for Gln, and Ser or Thr for Gly.</text>
        <dbReference type="EC" id="3.4.22.28"/>
    </reaction>
</comment>
<comment type="cofactor">
    <molecule>RNA-directed RNA polymerase</molecule>
    <cofactor evidence="2">
        <name>Mg(2+)</name>
        <dbReference type="ChEBI" id="CHEBI:18420"/>
    </cofactor>
    <text evidence="2 5">Binds 2 magnesium ions that constitute a dinuclear catalytic metal center (By similarity). The magnesium ions are not prebound but only present for catalysis (By similarity). Requires the presence of 3CDpro or 3CPro (By similarity).</text>
</comment>
<comment type="activity regulation">
    <molecule>RNA-directed RNA polymerase</molecule>
    <text evidence="2">Replication or transcription is subject to high level of random mutations by the nucleotide analog ribavirin.</text>
</comment>
<comment type="subunit">
    <molecule>Capsid protein VP0</molecule>
    <text evidence="2">Interacts with capsid protein VP1 and capsid protein VP3 to form heterotrimeric protomers.</text>
</comment>
<comment type="subunit">
    <molecule>Capsid protein VP1</molecule>
    <text evidence="2">Interacts with capsid protein VP0, and capsid protein VP3 to form heterotrimeric protomers (By similarity). Five protomers subsequently associate to form pentamers which serve as building blocks for the capsid (By similarity). Interacts with capsid protein VP2, capsid protein VP3 and capsid protein VP4 following cleavage of capsid protein VP0 (By similarity).</text>
</comment>
<comment type="subunit">
    <molecule>Capsid protein VP2</molecule>
    <text evidence="2">Interacts with capsid protein VP1 and capsid protein VP3 in the mature capsid.</text>
</comment>
<comment type="subunit">
    <molecule>Capsid protein VP3</molecule>
    <text evidence="2">Interacts with capsid protein VP0 and capsid protein VP1 to form heterotrimeric protomers (By similarity). Five protomers subsequently associate to form pentamers which serve as building blocks for the capsid (By similarity). Interacts with capsid protein VP4 in the mature capsid (By similarity). Interacts with protein 2C; this interaction may be important for virion morphogenesis (By similarity).</text>
</comment>
<comment type="subunit">
    <molecule>Capsid protein VP4</molecule>
    <text evidence="2">Interacts with capsid protein VP1 and capsid protein VP3.</text>
</comment>
<comment type="subunit">
    <molecule>Protease 2A</molecule>
    <text evidence="7">Homodimer.</text>
</comment>
<comment type="subunit">
    <molecule>Protein 2C</molecule>
    <text evidence="2">Homohexamer; forms a hexameric ring structure with 6-fold symmetry characteristic of AAA+ ATPases (By similarity). Interacts (via N-terminus) with host RTN3 (via reticulon domain); this interaction is important for viral replication (By similarity). Interacts with capsid protein VP3; this interaction may be important for virion morphogenesis (By similarity).</text>
</comment>
<comment type="subunit">
    <molecule>Protein 3AB</molecule>
    <text evidence="2">Interacts with protein 3CD.</text>
</comment>
<comment type="subunit">
    <molecule>Protein 3A</molecule>
    <text evidence="2 13">Homodimer (By similarity). Interacts with host GBF1 (By similarity). Interacts (via GOLD domain) with host ACBD3 (via GOLD domain); this interaction allows the formation of a viral protein 3A/ACBD3 heterotetramer with a 2:2 stoichiometry, which will stimulate the recruitment of host PI4KB in order to synthesize PI4P at the viral RNA replication sites (PubMed:31381608).</text>
</comment>
<comment type="subunit">
    <molecule>Viral protein genome-linked</molecule>
    <text evidence="2">Interacts with RNA-directed RNA polymerase.</text>
</comment>
<comment type="subunit">
    <molecule>Protease 3C</molecule>
    <text evidence="7">Interacts with host IFIH1/MDA5; this interaction inhibits host IFIH1.</text>
</comment>
<comment type="subunit">
    <molecule>Protein 3CD</molecule>
    <text evidence="2">Interacts with protein 3AB and with RNA-directed RNA polymerase.</text>
</comment>
<comment type="subunit">
    <molecule>RNA-directed RNA polymerase</molecule>
    <text evidence="2">Interacts with Viral protein genome-linked and with protein 3CD.</text>
</comment>
<comment type="subcellular location">
    <molecule>Capsid protein VP0</molecule>
    <subcellularLocation>
        <location>Virion</location>
    </subcellularLocation>
    <subcellularLocation>
        <location evidence="14">Host cytoplasm</location>
    </subcellularLocation>
</comment>
<comment type="subcellular location">
    <molecule>Capsid protein VP4</molecule>
    <subcellularLocation>
        <location>Virion</location>
    </subcellularLocation>
</comment>
<comment type="subcellular location">
    <molecule>Capsid protein VP2</molecule>
    <subcellularLocation>
        <location evidence="2">Virion</location>
    </subcellularLocation>
    <subcellularLocation>
        <location evidence="14">Host cytoplasm</location>
    </subcellularLocation>
</comment>
<comment type="subcellular location">
    <molecule>Capsid protein VP3</molecule>
    <subcellularLocation>
        <location evidence="2">Virion</location>
    </subcellularLocation>
    <subcellularLocation>
        <location evidence="14">Host cytoplasm</location>
    </subcellularLocation>
</comment>
<comment type="subcellular location">
    <molecule>Capsid protein VP1</molecule>
    <subcellularLocation>
        <location evidence="2">Virion</location>
    </subcellularLocation>
    <subcellularLocation>
        <location evidence="14">Host cytoplasm</location>
    </subcellularLocation>
</comment>
<comment type="subcellular location">
    <molecule>Protein 2B</molecule>
    <subcellularLocation>
        <location evidence="14">Host cytoplasmic vesicle membrane</location>
        <topology evidence="14">Peripheral membrane protein</topology>
        <orientation evidence="14">Cytoplasmic side</orientation>
    </subcellularLocation>
    <text>Probably localizes to the surface of intracellular membrane vesicles that are induced after virus infection as the site for viral RNA replication. These vesicles are derived from the endoplasmic reticulum.</text>
</comment>
<comment type="subcellular location">
    <molecule>Protein 2C</molecule>
    <subcellularLocation>
        <location evidence="14">Host cytoplasmic vesicle membrane</location>
        <topology evidence="14">Peripheral membrane protein</topology>
        <orientation evidence="14">Cytoplasmic side</orientation>
    </subcellularLocation>
    <text>Probably localizes to the surface of intracellular membrane vesicles that are induced after virus infection as the site for viral RNA replication. These vesicles are derived from the endoplasmic reticulum.</text>
</comment>
<comment type="subcellular location">
    <molecule>Protein 3A</molecule>
    <subcellularLocation>
        <location evidence="14">Host cytoplasmic vesicle membrane</location>
        <topology evidence="14">Peripheral membrane protein</topology>
        <orientation evidence="14">Cytoplasmic side</orientation>
    </subcellularLocation>
    <text>Probably localizes to the surface of intracellular membrane vesicles that are induced after virus infection as the site for viral RNA replication. These vesicles are derived from the endoplasmic reticulum.</text>
</comment>
<comment type="subcellular location">
    <molecule>Protein 3AB</molecule>
    <subcellularLocation>
        <location evidence="14">Host cytoplasmic vesicle membrane</location>
        <topology evidence="14">Peripheral membrane protein</topology>
        <orientation evidence="14">Cytoplasmic side</orientation>
    </subcellularLocation>
    <text>Probably localizes to the surface of intracellular membrane vesicles that are induced after virus infection as the site for viral RNA replication. These vesicles are derived from the endoplasmic reticulum.</text>
</comment>
<comment type="subcellular location">
    <molecule>Viral protein genome-linked</molecule>
    <subcellularLocation>
        <location evidence="2">Virion</location>
    </subcellularLocation>
    <subcellularLocation>
        <location evidence="6">Host cytoplasm</location>
    </subcellularLocation>
</comment>
<comment type="subcellular location">
    <molecule>Protease 3C</molecule>
    <subcellularLocation>
        <location>Host cytoplasm</location>
    </subcellularLocation>
</comment>
<comment type="subcellular location">
    <molecule>Protein 3CD</molecule>
    <subcellularLocation>
        <location evidence="2">Host nucleus</location>
    </subcellularLocation>
    <subcellularLocation>
        <location evidence="2">Host cytoplasm</location>
    </subcellularLocation>
    <subcellularLocation>
        <location evidence="14">Host cytoplasmic vesicle membrane</location>
        <topology evidence="14">Peripheral membrane protein</topology>
        <orientation evidence="14">Cytoplasmic side</orientation>
    </subcellularLocation>
    <text>Probably localizes to the surface of intracellular membrane vesicles that are induced after virus infection as the site for viral RNA replication. These vesicles are derived from the endoplasmic reticulum.</text>
</comment>
<comment type="subcellular location">
    <molecule>RNA-directed RNA polymerase</molecule>
    <subcellularLocation>
        <location evidence="14">Host cytoplasmic vesicle membrane</location>
        <topology evidence="14">Peripheral membrane protein</topology>
        <orientation evidence="14">Cytoplasmic side</orientation>
    </subcellularLocation>
    <text>Probably localizes to the surface of intracellular membrane vesicles that are induced after virus infection as the site for viral RNA replication. These vesicles are derived from the endoplasmic reticulum.</text>
</comment>
<comment type="domain">
    <molecule>Protein 2C</molecule>
    <text evidence="1 2">The N-terminus has membrane-binding (By similarity). The N-terminus also displays RNA-binding properties (By similarity). The N-terminus is involved in oligomerization (By similarity). The central part contains an ATPase domain and a degenerate C4-type zinc-finger with only 3 cysteines (By similarity). The C-terminus is involved in RNA-binding (By similarity). The extreme C-terminus contains a region involved in oligomerization (By similarity).</text>
</comment>
<comment type="PTM">
    <molecule>Genome polyprotein</molecule>
    <text evidence="2">Specific enzymatic cleavages in vivo by the viral proteases yield processing intermediates and the mature proteins.</text>
</comment>
<comment type="PTM">
    <molecule>Capsid protein VP0</molecule>
    <text evidence="2">Myristoylation is required for the formation of pentamers during virus assembly. Further assembly of 12 pentamers and a molecule of genomic RNA generates the provirion.</text>
</comment>
<comment type="PTM">
    <molecule>Capsid protein VP0</molecule>
    <text evidence="2">During virion maturation, immature virions are rendered infectious following cleavage of VP0 into VP4 and VP2. This maturation seems to be an autocatalytic event triggered by the presence of RNA in the capsid and it is followed by a conformational change infectious virion.</text>
</comment>
<comment type="PTM">
    <molecule>Capsid protein VP4</molecule>
    <text evidence="2">Myristoylation is required during RNA encapsidation and formation of the mature virus particle.</text>
</comment>
<comment type="PTM">
    <molecule>Viral protein genome-linked</molecule>
    <text evidence="2">VPg is uridylylated by the polymerase into VPg-pUpU. This acts as a nucleotide-peptide primer for the genomic RNA replication.</text>
</comment>
<comment type="similarity">
    <text evidence="14">Belongs to the picornaviruses polyprotein family.</text>
</comment>